<keyword id="KW-0002">3D-structure</keyword>
<keyword id="KW-0025">Alternative splicing</keyword>
<keyword id="KW-1003">Cell membrane</keyword>
<keyword id="KW-0984">Congenital hypothyroidism</keyword>
<keyword id="KW-0903">Direct protein sequencing</keyword>
<keyword id="KW-0225">Disease variant</keyword>
<keyword id="KW-1015">Disulfide bond</keyword>
<keyword id="KW-0297">G-protein coupled receptor</keyword>
<keyword id="KW-0325">Glycoprotein</keyword>
<keyword id="KW-0433">Leucine-rich repeat</keyword>
<keyword id="KW-0472">Membrane</keyword>
<keyword id="KW-1267">Proteomics identification</keyword>
<keyword id="KW-0675">Receptor</keyword>
<keyword id="KW-1185">Reference proteome</keyword>
<keyword id="KW-0677">Repeat</keyword>
<keyword id="KW-0732">Signal</keyword>
<keyword id="KW-0765">Sulfation</keyword>
<keyword id="KW-0807">Transducer</keyword>
<keyword id="KW-0812">Transmembrane</keyword>
<keyword id="KW-1133">Transmembrane helix</keyword>
<accession>P16473</accession>
<accession>A0A0A0MTJ0</accession>
<accession>A0PJU7</accession>
<accession>F5GYU5</accession>
<accession>G3V2A9</accession>
<accession>Q16503</accession>
<accession>Q8TB90</accession>
<accession>Q96GT6</accession>
<accession>Q9P1V4</accession>
<accession>Q9ULA3</accession>
<accession>Q9UPH3</accession>
<proteinExistence type="evidence at protein level"/>
<protein>
    <recommendedName>
        <fullName>Thyrotropin receptor</fullName>
    </recommendedName>
    <alternativeName>
        <fullName>Thyroid-stimulating hormone receptor</fullName>
        <shortName>TSH-R</shortName>
    </alternativeName>
</protein>
<organism>
    <name type="scientific">Homo sapiens</name>
    <name type="common">Human</name>
    <dbReference type="NCBI Taxonomy" id="9606"/>
    <lineage>
        <taxon>Eukaryota</taxon>
        <taxon>Metazoa</taxon>
        <taxon>Chordata</taxon>
        <taxon>Craniata</taxon>
        <taxon>Vertebrata</taxon>
        <taxon>Euteleostomi</taxon>
        <taxon>Mammalia</taxon>
        <taxon>Eutheria</taxon>
        <taxon>Euarchontoglires</taxon>
        <taxon>Primates</taxon>
        <taxon>Haplorrhini</taxon>
        <taxon>Catarrhini</taxon>
        <taxon>Hominidae</taxon>
        <taxon>Homo</taxon>
    </lineage>
</organism>
<comment type="function">
    <text evidence="1 23 25">Receptor for the thyroid-stimulating hormone (TSH) or thyrotropin (PubMed:11847099, PubMed:12045258). Also acts as a receptor for the heterodimeric glycoprotein hormone (GPHA2:GPHB5) or thyrostimulin (PubMed:12045258). The activity of this receptor is mediated by G proteins which activate adenylate cyclase (PubMed:11847099). Plays a central role in controlling thyroid cell metabolism (By similarity).</text>
</comment>
<comment type="subunit">
    <text evidence="25 36">Interacts with heterodimer GPHA2:GPHB5; this interaction stimulates cAMP production (PubMed:12045258). Interacts (via the PDZ-binding motif) with SCRIB; regulates TSHR trafficking and function (PubMed:15775968).</text>
</comment>
<comment type="interaction">
    <interactant intactId="EBI-13939599">
        <id>P16473</id>
    </interactant>
    <interactant intactId="EBI-2903663">
        <id>P30542</id>
        <label>ADORA1</label>
    </interactant>
    <organismsDiffer>false</organismsDiffer>
    <experiments>2</experiments>
</comment>
<comment type="interaction">
    <interactant intactId="EBI-13939599">
        <id>P16473</id>
    </interactant>
    <interactant intactId="EBI-750096">
        <id>Q9NPA3</id>
        <label>MID1IP1</label>
    </interactant>
    <organismsDiffer>false</organismsDiffer>
    <experiments>2</experiments>
</comment>
<comment type="interaction">
    <interactant intactId="EBI-13939599">
        <id>P16473</id>
    </interactant>
    <interactant intactId="EBI-357345">
        <id>Q14160</id>
        <label>SCRIB</label>
    </interactant>
    <organismsDiffer>false</organismsDiffer>
    <experiments>3</experiments>
</comment>
<comment type="interaction">
    <interactant intactId="EBI-13939599">
        <id>P16473</id>
    </interactant>
    <interactant intactId="EBI-524909">
        <id>P21579</id>
        <label>SYT1</label>
    </interactant>
    <organismsDiffer>false</organismsDiffer>
    <experiments>2</experiments>
</comment>
<comment type="subcellular location">
    <subcellularLocation>
        <location evidence="23">Cell membrane</location>
        <topology evidence="71">Multi-pass membrane protein</topology>
    </subcellularLocation>
    <subcellularLocation>
        <location evidence="23">Basolateral cell membrane</location>
        <topology evidence="71">Multi-pass membrane protein</topology>
    </subcellularLocation>
</comment>
<comment type="alternative products">
    <event type="alternative splicing"/>
    <isoform>
        <id>P16473-1</id>
        <name>Long</name>
        <sequence type="displayed"/>
    </isoform>
    <isoform>
        <id>P16473-2</id>
        <name>Short</name>
        <sequence type="described" ref="VSP_001981 VSP_001982"/>
    </isoform>
    <isoform>
        <id>P16473-3</id>
        <name>3</name>
        <sequence type="described" ref="VSP_044643 VSP_044644"/>
    </isoform>
    <text>Additional isoforms seem to exist.</text>
</comment>
<comment type="tissue specificity">
    <text evidence="23 42">Expressed in thyroide cells (at protein level) (PubMed:11847099). Expressed in the thyroid (PubMed:2610690).</text>
</comment>
<comment type="PTM">
    <text evidence="23">Glycosylated.</text>
</comment>
<comment type="PTM">
    <text evidence="23">Sulfated. Sulfation on Tyr-385 plays a role in thyrotropin receptor binding and activation.</text>
</comment>
<comment type="polymorphism">
    <text evidence="24">Polymorphism at position 727 could be associated with Graves disease.</text>
</comment>
<comment type="disease">
    <text>Defects in TSHR are found in patients affected by hyperthyroidism with different etiologies. Somatic, constitutively activating TSHR mutations and/or constitutively activating G(s)alpha mutations have been identified in toxic thyroid nodules (TTNs) that are the predominant cause of hyperthyroidism in iodine deficient areas. These mutations lead to TSH independent activation of the cAMP cascade resulting in thyroid growth and hormone production. TSHR mutations are found in autonomously functioning thyroid nodules (AFTN), toxic multinodular goiter (TMNG) and hyperfunctioning thyroid adenomas (HTA). TMNG encompasses a spectrum of different clinical entities, ranging from a single hyperfunctioning nodule within an enlarged thyroid, to multiple hyperfunctioning areas scattered throughout the gland. HTA are discrete encapsulated neoplasms characterized by TSH-independent autonomous growth, hypersecretion of thyroid hormones, and TSH suppression. Defects in TSHR are also a cause of thyroid neoplasms (papillary and follicular cancers).</text>
</comment>
<comment type="disease">
    <text>Autoantibodies against TSHR are directly responsible for the pathogenesis and hyperthyroidism of Graves disease. Antibody interaction with TSHR results in an uncontrolled receptor stimulation.</text>
</comment>
<comment type="disease" evidence="9 14 19 26 32 35 41 45 54 57 58 61">
    <disease id="DI-00362">
        <name>Hypothyroidism, congenital, non-goitrous, 1</name>
        <acronym>CHNG1</acronym>
        <description>A non-autoimmune condition characterized by resistance to thyroid-stimulating hormone (TSH) leading to increased levels of plasma TSH and low levels of thyroid hormone. It presents variable severity depending on the completeness of the defect. Most patients are euthyroid and asymptomatic, with a normal sized thyroid gland. Only a subset of patients develop hypothyroidism and present a hypoplastic thyroid gland.</description>
        <dbReference type="MIM" id="275200"/>
    </disease>
    <text>The disease is caused by variants affecting the gene represented in this entry.</text>
</comment>
<comment type="disease" evidence="66">
    <disease id="DI-02821">
        <name>Familial gestational hyperthyroidism</name>
        <acronym>HTFG</acronym>
        <description>A condition characterized by abnormally high levels of serum thyroid hormones occurring during early pregnancy.</description>
        <dbReference type="MIM" id="603373"/>
    </disease>
    <text>The disease is caused by variants affecting the gene represented in this entry.</text>
</comment>
<comment type="disease" evidence="5 10 13 15 17 21 22 34 48 49 53 55 62 63 64 65">
    <disease id="DI-02059">
        <name>Hyperthyroidism, non-autoimmune</name>
        <acronym>HTNA</acronym>
        <description>A condition characterized by abnormally high levels of serum thyroid hormones, thyroid hyperplasia, goiter and lack of anti-thyroid antibodies. Typical features of Graves disease such as exophthalmia, myxedema, antibodies anti-TSH receptor and lymphocytic infiltration of the thyroid gland are absent.</description>
        <dbReference type="MIM" id="609152"/>
    </disease>
    <text>The disease is caused by variants affecting the gene represented in this entry.</text>
</comment>
<comment type="similarity">
    <text evidence="3">Belongs to the G-protein coupled receptor 1 family. FSH/LSH/TSH subfamily.</text>
</comment>
<comment type="sequence caution" evidence="71">
    <conflict type="frameshift">
        <sequence resource="EMBL-CDS" id="AAA70232"/>
    </conflict>
</comment>
<comment type="online information" name="TSH receptor database">
    <link uri="https://endokrinologie.uniklinikum-leipzig.de/tsh/"/>
</comment>
<comment type="online information" name="Wikipedia">
    <link uri="https://en.wikipedia.org/wiki/TSH_receptor"/>
    <text>TSH receptor entry</text>
</comment>
<comment type="online information" name="Atlas of Genetics and Cytogenetics in Oncology and Haematology">
    <link uri="https://atlasgeneticsoncology.org/gene/290/TSHR"/>
</comment>
<reference key="1">
    <citation type="journal article" date="1989" name="Biochem. Biophys. Res. Commun.">
        <title>Molecular cloning, sequence and functional expression of the cDNA for the human thyrotropin receptor.</title>
        <authorList>
            <person name="Nagayama Y."/>
            <person name="Kaufman K.D."/>
            <person name="Seto P."/>
            <person name="Rapoport B."/>
        </authorList>
    </citation>
    <scope>NUCLEOTIDE SEQUENCE [MRNA] (ISOFORM LONG)</scope>
    <scope>VARIANT ASP-727</scope>
</reference>
<reference key="2">
    <citation type="journal article" date="1989" name="Biochem. Biophys. Res. Commun.">
        <title>Cloning, sequencing and expression of the human thyrotropin (TSH) receptor: evidence for binding of autoantibodies.</title>
        <authorList>
            <person name="Libert F."/>
            <person name="Lefort A."/>
            <person name="Gerard C."/>
            <person name="Parmentier M."/>
            <person name="Perret J."/>
            <person name="Ludgate M."/>
            <person name="Dumont J.E."/>
            <person name="Vassart G."/>
        </authorList>
    </citation>
    <scope>NUCLEOTIDE SEQUENCE [MRNA] (ISOFORM LONG)</scope>
    <scope>TISSUE SPECIFICITY</scope>
    <source>
        <tissue>Thyroid</tissue>
    </source>
</reference>
<reference key="3">
    <citation type="journal article" date="1990" name="Biochem. Biophys. Res. Commun.">
        <title>Cloning, sequencing and expression of human TSH receptor.</title>
        <authorList>
            <person name="Misrahi M."/>
            <person name="Loosfelt H."/>
            <person name="Atger M."/>
            <person name="Sar S."/>
            <person name="Guiochon-Mantel A."/>
            <person name="Milgrom E."/>
        </authorList>
    </citation>
    <scope>NUCLEOTIDE SEQUENCE [MRNA] (ISOFORM LONG)</scope>
</reference>
<reference key="4">
    <citation type="journal article" date="1990" name="Mol. Endocrinol.">
        <title>Isolation of TSH and LH/CG receptor cDNAs from human thyroid: regulation by tissue specific splicing.</title>
        <authorList>
            <person name="Frazier A.L."/>
            <person name="Robbins L.S."/>
            <person name="Stork P.J."/>
            <person name="Sprengel R."/>
            <person name="Segaloff D.L."/>
            <person name="Cone R.D."/>
        </authorList>
    </citation>
    <scope>NUCLEOTIDE SEQUENCE [MRNA] (ISOFORM LONG)</scope>
    <scope>VARIANT ASP-727</scope>
    <source>
        <tissue>Thyroid</tissue>
    </source>
</reference>
<reference key="5">
    <citation type="journal article" date="1992" name="Biochem. Biophys. Res. Commun.">
        <title>Cloning and sequencing of a 1.3 KB variant of human thyrotropin receptor mRNA lacking the transmembrane domain.</title>
        <authorList>
            <person name="Graves P.N."/>
            <person name="Tomer Y."/>
            <person name="Davies T.F."/>
        </authorList>
    </citation>
    <scope>NUCLEOTIDE SEQUENCE [MRNA] (ISOFORM SHORT)</scope>
</reference>
<reference key="6">
    <citation type="journal article" date="1992" name="Biochem. Biophys. Res. Commun.">
        <title>Molecular cloning and sequencing of an alternatively spliced form of the human thyrotropin receptor transcript.</title>
        <authorList>
            <person name="Takeshita A."/>
            <person name="Nagayama Y."/>
            <person name="Fujiyama K."/>
            <person name="Yokoyama N."/>
            <person name="Namba H."/>
            <person name="Yamashita S."/>
            <person name="Izumi M."/>
            <person name="Nagataki S."/>
        </authorList>
    </citation>
    <scope>NUCLEOTIDE SEQUENCE [MRNA] (ISOFORM SHORT)</scope>
    <source>
        <tissue>Thyroid</tissue>
    </source>
</reference>
<reference key="7">
    <citation type="submission" date="2003-10" db="EMBL/GenBank/DDBJ databases">
        <title>cDNA clones of human proteins involved in signal transduction sequenced by the Guthrie cDNA resource center (www.cdna.org).</title>
        <authorList>
            <person name="Kopatz S.A."/>
            <person name="Aronstam R.S."/>
            <person name="Sharma S.V."/>
        </authorList>
    </citation>
    <scope>NUCLEOTIDE SEQUENCE [LARGE SCALE MRNA] (ISOFORM LONG)</scope>
    <scope>VARIANT ASP-727</scope>
    <source>
        <tissue>Thyroid</tissue>
    </source>
</reference>
<reference key="8">
    <citation type="journal article" date="2003" name="Nature">
        <title>The DNA sequence and analysis of human chromosome 14.</title>
        <authorList>
            <person name="Heilig R."/>
            <person name="Eckenberg R."/>
            <person name="Petit J.-L."/>
            <person name="Fonknechten N."/>
            <person name="Da Silva C."/>
            <person name="Cattolico L."/>
            <person name="Levy M."/>
            <person name="Barbe V."/>
            <person name="De Berardinis V."/>
            <person name="Ureta-Vidal A."/>
            <person name="Pelletier E."/>
            <person name="Vico V."/>
            <person name="Anthouard V."/>
            <person name="Rowen L."/>
            <person name="Madan A."/>
            <person name="Qin S."/>
            <person name="Sun H."/>
            <person name="Du H."/>
            <person name="Pepin K."/>
            <person name="Artiguenave F."/>
            <person name="Robert C."/>
            <person name="Cruaud C."/>
            <person name="Bruels T."/>
            <person name="Jaillon O."/>
            <person name="Friedlander L."/>
            <person name="Samson G."/>
            <person name="Brottier P."/>
            <person name="Cure S."/>
            <person name="Segurens B."/>
            <person name="Aniere F."/>
            <person name="Samain S."/>
            <person name="Crespeau H."/>
            <person name="Abbasi N."/>
            <person name="Aiach N."/>
            <person name="Boscus D."/>
            <person name="Dickhoff R."/>
            <person name="Dors M."/>
            <person name="Dubois I."/>
            <person name="Friedman C."/>
            <person name="Gouyvenoux M."/>
            <person name="James R."/>
            <person name="Madan A."/>
            <person name="Mairey-Estrada B."/>
            <person name="Mangenot S."/>
            <person name="Martins N."/>
            <person name="Menard M."/>
            <person name="Oztas S."/>
            <person name="Ratcliffe A."/>
            <person name="Shaffer T."/>
            <person name="Trask B."/>
            <person name="Vacherie B."/>
            <person name="Bellemere C."/>
            <person name="Belser C."/>
            <person name="Besnard-Gonnet M."/>
            <person name="Bartol-Mavel D."/>
            <person name="Boutard M."/>
            <person name="Briez-Silla S."/>
            <person name="Combette S."/>
            <person name="Dufosse-Laurent V."/>
            <person name="Ferron C."/>
            <person name="Lechaplais C."/>
            <person name="Louesse C."/>
            <person name="Muselet D."/>
            <person name="Magdelenat G."/>
            <person name="Pateau E."/>
            <person name="Petit E."/>
            <person name="Sirvain-Trukniewicz P."/>
            <person name="Trybou A."/>
            <person name="Vega-Czarny N."/>
            <person name="Bataille E."/>
            <person name="Bluet E."/>
            <person name="Bordelais I."/>
            <person name="Dubois M."/>
            <person name="Dumont C."/>
            <person name="Guerin T."/>
            <person name="Haffray S."/>
            <person name="Hammadi R."/>
            <person name="Muanga J."/>
            <person name="Pellouin V."/>
            <person name="Robert D."/>
            <person name="Wunderle E."/>
            <person name="Gauguet G."/>
            <person name="Roy A."/>
            <person name="Sainte-Marthe L."/>
            <person name="Verdier J."/>
            <person name="Verdier-Discala C."/>
            <person name="Hillier L.W."/>
            <person name="Fulton L."/>
            <person name="McPherson J."/>
            <person name="Matsuda F."/>
            <person name="Wilson R."/>
            <person name="Scarpelli C."/>
            <person name="Gyapay G."/>
            <person name="Wincker P."/>
            <person name="Saurin W."/>
            <person name="Quetier F."/>
            <person name="Waterston R."/>
            <person name="Hood L."/>
            <person name="Weissenbach J."/>
        </authorList>
    </citation>
    <scope>NUCLEOTIDE SEQUENCE [LARGE SCALE GENOMIC DNA]</scope>
</reference>
<reference key="9">
    <citation type="journal article" date="2004" name="Genome Res.">
        <title>The status, quality, and expansion of the NIH full-length cDNA project: the Mammalian Gene Collection (MGC).</title>
        <authorList>
            <consortium name="The MGC Project Team"/>
        </authorList>
    </citation>
    <scope>NUCLEOTIDE SEQUENCE [LARGE SCALE MRNA] (ISOFORMS SHORT AND 3)</scope>
    <source>
        <tissue>Ovarian adenocarcinoma</tissue>
    </source>
</reference>
<reference key="10">
    <citation type="journal article" date="2001" name="Biochemistry">
        <title>Purification and characterization of a soluble bioactive amino-terminal extracellular domain of the human thyrotropin receptor.</title>
        <authorList>
            <person name="Cornelis S."/>
            <person name="Uttenweiler-Joseph S."/>
            <person name="Panneels V."/>
            <person name="Vassart G."/>
            <person name="Costagliola S."/>
        </authorList>
    </citation>
    <scope>PROTEIN SEQUENCE OF 66-80; 113-123; 184-210 AND 294-310</scope>
    <scope>GLYCOSYLATION AT ASN-77; ASN-113; ASN-198 AND ASN-302</scope>
</reference>
<reference key="11">
    <citation type="journal article" date="2002" name="EMBO J.">
        <title>Tyrosine sulfation is required for agonist recognition by glycoprotein hormone receptors.</title>
        <authorList>
            <person name="Costagliola S."/>
            <person name="Panneels V."/>
            <person name="Bonomi M."/>
            <person name="Koch J."/>
            <person name="Many M.C."/>
            <person name="Smits G."/>
            <person name="Vassart G."/>
        </authorList>
    </citation>
    <scope>FUNCTION</scope>
    <scope>GLYCOSYLATION</scope>
    <scope>SUBCELLULAR LOCATION</scope>
    <scope>SULFATION AT TYR-385</scope>
    <scope>TISSUE SPECIFICITY</scope>
    <scope>MUTAGENESIS OF CYS-283; TYR-385 AND TYR-387</scope>
</reference>
<reference key="12">
    <citation type="journal article" date="2002" name="J. Clin. Invest.">
        <title>Thyrostimulin, a heterodimer of two new human glycoprotein hormone subunits, activates the thyroid-stimulating hormone receptor.</title>
        <authorList>
            <person name="Nakabayashi K."/>
            <person name="Matsumi H."/>
            <person name="Bhalla A."/>
            <person name="Bae J."/>
            <person name="Mosselman S."/>
            <person name="Hsu S.Y."/>
            <person name="Hsueh A.J.W."/>
        </authorList>
    </citation>
    <scope>FUNCTION</scope>
    <scope>INTERACTION WITH HETERODIMER GPHA2-GPHB5</scope>
</reference>
<reference key="13">
    <citation type="journal article" date="2005" name="EMBO J.">
        <title>Thyrotropin receptor trafficking relies on the hScrib-betaPIX-GIT1-ARF6 pathway.</title>
        <authorList>
            <person name="Lahuna O."/>
            <person name="Quellari M."/>
            <person name="Achard C."/>
            <person name="Nola S."/>
            <person name="Meduri G."/>
            <person name="Navarro C."/>
            <person name="Vitale N."/>
            <person name="Borg J.-P."/>
            <person name="Misrahi M."/>
        </authorList>
    </citation>
    <scope>INTERACTION WITH SCRIB</scope>
</reference>
<reference key="14">
    <citation type="journal article" date="1995" name="Structure">
        <title>Structural predictions for the ligand-binding region of glycoprotein hormone receptors and the nature of hormone-receptor interactions.</title>
        <authorList>
            <person name="Jiang X."/>
            <person name="Dreano M."/>
            <person name="Buckler D.R."/>
            <person name="Cheng S."/>
            <person name="Ythier A."/>
            <person name="Wu H."/>
            <person name="Hendrickson W.A."/>
            <person name="el Tayar N."/>
        </authorList>
    </citation>
    <scope>3D-STRUCTURE MODELING OF 54-236</scope>
</reference>
<reference key="15">
    <citation type="journal article" date="2007" name="Thyroid">
        <title>Crystal structure of the TSH receptor in complex with a thyroid-stimulating autoantibody.</title>
        <authorList>
            <person name="Sanders J."/>
            <person name="Chirgadze D.Y."/>
            <person name="Sanders P."/>
            <person name="Baker S."/>
            <person name="Sullivan A."/>
            <person name="Bhardwaja A."/>
            <person name="Bolton J."/>
            <person name="Reeve M."/>
            <person name="Nakatake N."/>
            <person name="Evans M."/>
            <person name="Richards T."/>
            <person name="Powell M."/>
            <person name="Miguel R.N."/>
            <person name="Blundell T.L."/>
            <person name="Furmaniak J."/>
            <person name="Smith B.R."/>
        </authorList>
    </citation>
    <scope>X-RAY CRYSTALLOGRAPHY (2.55 ANGSTROMS) OF 22-260 IN COMPLEX WITH ANTIBODY</scope>
    <scope>GLYCOSYLATION AT ASN-77; ASN-99; ASN-113; ASN-177 AND ASN-198</scope>
    <scope>N-TERMINAL DISULFIDE BOND</scope>
</reference>
<reference key="16">
    <citation type="journal article" date="2002" name="Med. Sci. Monit.">
        <title>Further studies of genetic susceptibility to Graves' disease in a Russian population.</title>
        <authorList>
            <person name="Chistiakov D.A."/>
            <person name="Savost'anov K.V."/>
            <person name="Turakulov R.I."/>
            <person name="Petunina N."/>
            <person name="Balabolkin M.I."/>
            <person name="Nosikov V.V."/>
        </authorList>
    </citation>
    <scope>VARIANT ASP-727</scope>
    <scope>POLYMORPHISM</scope>
</reference>
<reference key="17">
    <citation type="journal article" date="2002" name="Thyroid">
        <title>A germline single nucleotide polymorphism at the intracellular domain of the human thyrotropin receptor does not have a major effect on the development of Graves' disease.</title>
        <authorList>
            <person name="Ban Y."/>
            <person name="Greenberg D.A."/>
            <person name="Concepcion E.S."/>
            <person name="Tomer Y."/>
        </authorList>
    </citation>
    <scope>VARIANT ASP-727</scope>
</reference>
<reference key="18">
    <citation type="journal article" date="2003" name="Thyroid">
        <title>Association of Graves' disease with intragenic polymorphism of the thyrotropin receptor gene in a cohort of Singapore patients of multi-ethnic origins.</title>
        <authorList>
            <person name="Ho S.-C."/>
            <person name="Goh S.-S."/>
            <person name="Khoo D.H."/>
        </authorList>
    </citation>
    <scope>VARIANTS HIS-36; THR-52 AND ASP-727</scope>
</reference>
<reference key="19">
    <citation type="journal article" date="2000" name="Eur. J. Endocrinol.">
        <title>The human thyrotropin receptor is highly mutable: a review of gain-of-function mutations.</title>
        <authorList>
            <person name="Farid N.R."/>
            <person name="Kascur V."/>
            <person name="Balazs C."/>
        </authorList>
    </citation>
    <scope>REVIEW ON VARIANTS</scope>
</reference>
<reference key="20">
    <citation type="journal article" date="1991" name="J. Clin. Endocrinol. Metab.">
        <title>A somatic point mutation in a putative ligand binding domain of the TSH receptor in a patient with autoimmune hyperthyroidism.</title>
        <authorList>
            <person name="Heldin N.-E."/>
            <person name="Gustavsson B."/>
            <person name="Westermark K."/>
            <person name="Westermark B."/>
        </authorList>
    </citation>
    <scope>VARIANT HIS-36</scope>
</reference>
<reference key="21">
    <citation type="journal article" date="1993" name="Nature">
        <title>Somatic mutations in the thyrotropin receptor gene cause hyperfunctioning thyroid adenomas.</title>
        <authorList>
            <person name="Parma J."/>
            <person name="Duprez L."/>
            <person name="van Sande J."/>
            <person name="Cochaux P."/>
            <person name="Gervy C."/>
            <person name="Mockel J."/>
            <person name="Dumont J.E."/>
            <person name="Vassart G."/>
        </authorList>
    </citation>
    <scope>VARIANTS HYPERTHYROIDISM GLY-619 AND ILE-623</scope>
</reference>
<reference key="22">
    <citation type="journal article" date="1994" name="J. Clin. Endocrinol. Metab.">
        <title>A genomic point mutation in the extracellular domain of the thyrotropin receptor in patients with Graves' ophthalmopathy.</title>
        <authorList>
            <person name="Bahn R.S."/>
            <person name="Dutton C.M."/>
            <person name="Heufelder A.E."/>
            <person name="Sarkar G."/>
        </authorList>
    </citation>
    <scope>VARIANT THR-52</scope>
</reference>
<reference key="23">
    <citation type="journal article" date="1994" name="J. Clin. Endocrinol. Metab.">
        <title>Novel mutations of thyrotropin receptor gene in thyroid hyperfunctioning adenomas. Rapid identification by fine needle aspiration biopsy.</title>
        <authorList>
            <person name="Porcellini A."/>
            <person name="Ciullo I."/>
            <person name="Laviola L."/>
            <person name="Amabile G."/>
            <person name="Fenzi G."/>
            <person name="Avvedimento V.E."/>
        </authorList>
    </citation>
    <scope>VARIANTS HYPERTHYROIDISM CYS-631; ILE-632; GLU-633 AND TYR-633</scope>
</reference>
<reference key="24">
    <citation type="journal article" date="1994" name="J. Clin. Endocrinol. Metab.">
        <title>Identification and functional characterization of two new somatic mutations causing constitutive activation of the thyrotropin receptor in hyperfunctioning autonomous adenomas of the thyroid.</title>
        <authorList>
            <person name="Paschke R."/>
            <person name="Tonacchera M."/>
            <person name="van Sande J."/>
            <person name="Parma J."/>
            <person name="Vassart G."/>
        </authorList>
    </citation>
    <scope>VARIANTS HYPERTHYROIDISM VAL-623 AND ILE-632</scope>
</reference>
<reference key="25">
    <citation type="journal article" date="1994" name="Nat. Genet.">
        <title>Germline mutations in the thyrotropin receptor gene cause non-autoimmune autosomal dominant hyperthyroidism.</title>
        <authorList>
            <person name="Duprez L."/>
            <person name="Parma J."/>
            <person name="van Sande J."/>
            <person name="Allgeier A."/>
            <person name="Leclere J."/>
            <person name="Schvartz C."/>
            <person name="Delisle M.-J."/>
            <person name="Decoulx M."/>
            <person name="Orgiazzi J."/>
            <person name="Dumont J.E."/>
            <person name="Vassart G."/>
        </authorList>
    </citation>
    <scope>VARIANTS HTNA ALA-509 AND TYR-672</scope>
</reference>
<reference key="26">
    <citation type="journal article" date="1995" name="Mol. Cell. Endocrinol.">
        <title>Functional analysis of a variant of the thyrotropin receptor gene in a family with Graves' disease.</title>
        <authorList>
            <person name="Gustavsson B."/>
            <person name="Eklof C."/>
            <person name="Westermark K."/>
            <person name="Westermark B."/>
            <person name="Heldin N.-E."/>
        </authorList>
    </citation>
    <scope>CHARACTERIZATION OF VARIANT HIS-36</scope>
</reference>
<reference key="27">
    <citation type="journal article" date="1995" name="N. Engl. J. Med.">
        <title>Congenital hyperthyroidism caused by a mutation in the thyrotropin-receptor gene.</title>
        <authorList>
            <person name="Kopp P."/>
            <person name="van Sande J."/>
            <person name="Parma J."/>
            <person name="Duprez L."/>
            <person name="Gerber H."/>
            <person name="Joss E."/>
            <person name="Jameson J.L."/>
            <person name="Dumont J.E."/>
            <person name="Vassart G."/>
        </authorList>
    </citation>
    <scope>VARIANT HTNA LEU-631</scope>
</reference>
<reference key="28">
    <citation type="journal article" date="1995" name="N. Engl. J. Med.">
        <title>Resistance to thyrotropin caused by mutations in the thyrotropin-receptor gene.</title>
        <authorList>
            <person name="Sunthornthepvarakul T."/>
            <person name="Gottschalk M.E."/>
            <person name="Hayashi Y."/>
            <person name="Refetoff S."/>
        </authorList>
    </citation>
    <scope>VARIANTS CHNG1 ALA-162 AND ASN-167</scope>
    <scope>VARIANT THR-52</scope>
</reference>
<reference key="29">
    <citation type="journal article" date="1995" name="Thyroid">
        <title>Point mutations in the thyrotropin receptor in human thyroid tumors.</title>
        <authorList>
            <person name="Ohno M."/>
            <person name="Endo T."/>
            <person name="Ohta K."/>
            <person name="Gunji K."/>
            <person name="Onaya T."/>
        </authorList>
    </citation>
    <scope>VARIANTS PAPILLARY CANCER ILE-197; GLU-219; ASP-715 AND MET-723</scope>
</reference>
<reference key="30">
    <citation type="journal article" date="1995" name="Thyroid">
        <title>Normal function in vivo of a homozygotic polymorphism in the human thyrotropin receptor.</title>
        <authorList>
            <person name="Cuddihy R.M."/>
            <person name="Bryant W.P."/>
            <person name="Bahn R.S."/>
        </authorList>
    </citation>
    <scope>VARIANT THR-52</scope>
</reference>
<reference key="31">
    <citation type="journal article" date="1996" name="J. Clin. Endocrinol. Metab.">
        <title>Functional characteristics of three new germline mutations of the thyrotropin receptor gene causing autosomal dominant toxic thyroid hyperplasia.</title>
        <authorList>
            <person name="Tonacchera M."/>
            <person name="van Sande J."/>
            <person name="Cetani F."/>
            <person name="Swillens S."/>
            <person name="Schvartz C."/>
            <person name="Winiszewski P."/>
            <person name="Portmann L."/>
            <person name="Dumont J.E."/>
            <person name="Vassart G."/>
            <person name="Parma J."/>
        </authorList>
    </citation>
    <scope>VARIANTS HTNA ARG-505; TYR-650 AND SER-670</scope>
</reference>
<reference key="32">
    <citation type="journal article" date="1996" name="J. Clin. Endocrinol. Metab.">
        <title>A neomutation of the thyroid-stimulating hormone receptor in a severe neonatal hyperthyroidism.</title>
        <authorList>
            <person name="de Roux N."/>
            <person name="Polak M."/>
            <person name="Couet J."/>
            <person name="Leger J."/>
            <person name="Czernichow P."/>
            <person name="Milgrom E."/>
            <person name="Misrahi M."/>
        </authorList>
    </citation>
    <scope>VARIANT HTNA THR-453</scope>
</reference>
<reference key="33">
    <citation type="journal article" date="1996" name="J. Clin. Endocrinol. Metab.">
        <title>Four families with loss of function mutations of the thyrotropin receptor.</title>
        <authorList>
            <person name="de Roux N."/>
            <person name="Misrahi M."/>
            <person name="Brauner R."/>
            <person name="Houang M."/>
            <person name="Carel J.-C."/>
            <person name="Granier M."/>
            <person name="Le Bouc Y."/>
            <person name="Ghinea N."/>
            <person name="Boumedienne A."/>
            <person name="Toublanc J.E."/>
            <person name="Milgrom E."/>
        </authorList>
    </citation>
    <scope>VARIANTS CHNG1 SER-41; ALA-162; TRP-390; ASN-410 AND LEU-525</scope>
</reference>
<reference key="34">
    <citation type="journal article" date="1997" name="J. Clin. Endocrinol. Metab.">
        <title>Detection of an activating mutation of the thyrotropin receptor in a case of an autonomously hyperfunctioning thyroid insular carcinoma.</title>
        <authorList>
            <person name="Russo D."/>
            <person name="Tumino S."/>
            <person name="Arturi F."/>
            <person name="Vigneri P."/>
            <person name="Grasso G."/>
            <person name="Pontecorvi A."/>
            <person name="Filetti S."/>
            <person name="Belfiore A."/>
        </authorList>
    </citation>
    <scope>VARIANT INSULAR CARCINOMA HIS-633</scope>
</reference>
<reference key="35">
    <citation type="journal article" date="1997" name="J. Clin. Endocrinol. Metab.">
        <title>Two novel mutations in the thyrotropin (TSH) receptor gene in a child with resistance to TSH.</title>
        <authorList>
            <person name="Clifton-Bligh R.J."/>
            <person name="Gregory J.W."/>
            <person name="Ludgate M."/>
            <person name="John R."/>
            <person name="Persani L."/>
            <person name="Asteria C."/>
            <person name="Beck-Peccoz P."/>
            <person name="Chatterjee V.K.K."/>
        </authorList>
    </citation>
    <scope>VARIANT CHNG1 GLN-109</scope>
</reference>
<reference key="36">
    <citation type="journal article" date="1997" name="J. Clin. Endocrinol. Metab.">
        <title>Diversity and prevalence of somatic mutations in the thyrotropin receptor and Gs alpha genes as a cause of toxic thyroid adenomas.</title>
        <authorList>
            <person name="Parma J."/>
            <person name="Duprez L."/>
            <person name="van Sande J."/>
            <person name="Hermans J."/>
            <person name="Rocmans P."/>
            <person name="van Vliet G."/>
            <person name="Costagliola S."/>
            <person name="Rodien P."/>
            <person name="Dumont J.E."/>
            <person name="Vassart G."/>
        </authorList>
    </citation>
    <scope>VARIANTS HYPERTHYROIDISM ASN-281; THR-281; THR-453; PHE-486; MET-486; THR-568; GLY-619; ILE-623; PHE-629; LEU-630; LEU-631; ILE-632; ALA-633; GLU-633; HIS-633; TYR-633 AND 658-ASN--ILE-661 DEL</scope>
</reference>
<reference key="37">
    <citation type="journal article" date="1997" name="J. Clin. Endocrinol. Metab.">
        <title>Mutations of the human thyrotropin receptor gene causing thyroid hypoplasia and persistent congenital hypothyroidism.</title>
        <authorList>
            <person name="Biebermann H."/>
            <person name="Schoeneberg T."/>
            <person name="Krude H."/>
            <person name="Schultz G."/>
            <person name="Gudermann T."/>
            <person name="Grueters A."/>
        </authorList>
    </citation>
    <scope>VARIANT CHNG1 TRP-390</scope>
</reference>
<reference key="38">
    <citation type="journal article" date="1997" name="J. Clin. Endocrinol. Metab.">
        <title>Sporadic congenital hyperthyroidism due to a spontaneous germline mutation in the thyrotropin receptor gene.</title>
        <authorList>
            <person name="Holzapfel H.P."/>
            <person name="Wonerow P."/>
            <person name="von Petrykowski W."/>
            <person name="Henschen M."/>
            <person name="Scherbaum W.A."/>
            <person name="Paschke R."/>
        </authorList>
    </citation>
    <scope>VARIANT HTNA ASN-505</scope>
</reference>
<reference key="39">
    <citation type="journal article" date="1997" name="J. Clin. Endocrinol. Metab.">
        <title>Identification of a new thyrotropin receptor germline mutation (Leu629Phe) in a family with neonatal onset of autosomal dominant nonautoimmune hyperthyroidism.</title>
        <authorList>
            <person name="Fuhrer D."/>
            <person name="Wonerow P."/>
            <person name="Willgerodt H."/>
            <person name="Paschke R."/>
        </authorList>
    </citation>
    <scope>VARIANT HTNA PHE-629</scope>
</reference>
<reference key="40">
    <citation type="journal article" date="1997" name="J. Clin. Invest.">
        <title>Familial congenital hypothyroidism due to inactivating mutation of the thyrotropin receptor causing profound hypoplasia of the thyroid gland.</title>
        <authorList>
            <person name="Abramowicz M.J."/>
            <person name="Duprez L."/>
            <person name="Parma J."/>
            <person name="Vassart G."/>
            <person name="Heinrichs C."/>
        </authorList>
    </citation>
    <scope>VARIANT CHNG1 THR-553</scope>
</reference>
<reference key="41">
    <citation type="journal article" date="1997" name="J. Clin. Invest.">
        <title>Congenital hyperthyroidism caused by a solitary toxic adenoma harboring a novel somatic mutation (serine281--&gt;isoleucine) in the extracellular domain of the thyrotropin receptor.</title>
        <authorList>
            <person name="Kopp P."/>
            <person name="Muirhead S."/>
            <person name="Jourdain N."/>
            <person name="Gu W.X."/>
            <person name="Jameson J.L."/>
            <person name="Rodd C."/>
        </authorList>
    </citation>
    <scope>VARIANT HYPERTHYROIDISM ILE-281</scope>
</reference>
<reference key="42">
    <citation type="journal article" date="1997" name="Thyroid">
        <title>Congenital nonautoimmune hyperthyroidism in a nonidentical twin caused by a sporadic germline mutation in the thyrotropin receptor gene.</title>
        <authorList>
            <person name="Kopp P."/>
            <person name="Jameson J.L."/>
            <person name="Roe T.F."/>
        </authorList>
    </citation>
    <scope>VARIANT HTNA ILE-632</scope>
</reference>
<reference key="43">
    <citation type="journal article" date="1998" name="J. Clin. Endocrinol. Metab.">
        <title>Severe congenital hyperthyroidism caused by a germ-line neo mutation in the extracellular portion of the thyrotropin receptor.</title>
        <authorList>
            <person name="Grueters A."/>
            <person name="Schoeneberg T."/>
            <person name="Biebermann H."/>
            <person name="Krude H."/>
            <person name="Krohn H.P."/>
            <person name="Dralle H."/>
            <person name="Gudermann T."/>
        </authorList>
    </citation>
    <scope>VARIANT HTNA ASN-281</scope>
    <scope>VARIANT HIS-528</scope>
</reference>
<reference key="44">
    <citation type="journal article" date="1998" name="N. Engl. J. Med.">
        <title>Familial gestational hyperthyroidism caused by a mutant thyrotropin receptor hypersensitive to human chorionic gonadotropin.</title>
        <authorList>
            <person name="Rodien P."/>
            <person name="Bremont C."/>
            <person name="Raffin Sanson M.-L."/>
            <person name="Parma J."/>
            <person name="van Sande J."/>
            <person name="Costagliola S."/>
            <person name="Luton J.-P."/>
            <person name="Vassart G."/>
            <person name="Duprez L."/>
        </authorList>
    </citation>
    <scope>VARIANT HTFG ARG-183</scope>
</reference>
<reference key="45">
    <citation type="journal article" date="1999" name="J. Clin. Endocrinol. Metab.">
        <title>A germline mutation of the thyrotropin receptor gene associated with thyrotoxicosis and mitral valve prolapse in a Chinese family.</title>
        <authorList>
            <person name="Khoo D.H.C."/>
            <person name="Parma J."/>
            <person name="Rajasoorya C."/>
            <person name="Ho S.C."/>
            <person name="Vassart G."/>
        </authorList>
    </citation>
    <scope>VARIANT HTNA SER-639</scope>
</reference>
<reference key="46">
    <citation type="journal article" date="1999" name="J. Clin. Endocrinol. Metab.">
        <title>Germline polymorphism of codon 727 of human thyroid-stimulating hormone receptor is associated with toxic multinodular goiter.</title>
        <authorList>
            <person name="Gabriel E.M."/>
            <person name="Bergert E.R."/>
            <person name="Grant C.S."/>
            <person name="van Heerden J.A."/>
            <person name="Thompson G.B."/>
            <person name="Morris J.C."/>
        </authorList>
    </citation>
    <scope>VARIANTS MET-606; GLY-703; GLU-720 AND ASP-727</scope>
</reference>
<reference key="47">
    <citation type="journal article" date="1999" name="Thyroid">
        <title>A Val 677 activating mutation of the thyrotropin receptor in a Hurthle cell thyroid carcinoma associated with thyrotoxicosis.</title>
        <authorList>
            <person name="Russo D."/>
            <person name="Wong M.G."/>
            <person name="Costante G."/>
            <person name="Chiefari E."/>
            <person name="Treseler P.A."/>
            <person name="Arturi F."/>
            <person name="Filetti S."/>
            <person name="Clark O.H."/>
        </authorList>
    </citation>
    <scope>VARIANT THYROID CARCINOMA VAL-677</scope>
</reference>
<reference key="48">
    <citation type="journal article" date="1999" name="Thyroid">
        <title>A novel thyrotropin receptor mutation in an infant with severe thyrotoxicosis.</title>
        <authorList>
            <person name="Esapa C.T."/>
            <person name="Duprez L."/>
            <person name="Ludgate M."/>
            <person name="Mustafa M.S."/>
            <person name="Kendall-Taylor P."/>
            <person name="Vassart G."/>
            <person name="Harris P.E."/>
        </authorList>
    </citation>
    <scope>VARIANT HYPERTHYROIDISM LEU-597</scope>
</reference>
<reference key="49">
    <citation type="journal article" date="2000" name="Eur. J. Endocrinol.">
        <title>A novel activating mutation in the thyrotropin receptor gene in an autonomously functioning thyroid nodule developed by a Japanese patient.</title>
        <authorList>
            <person name="Kosugi S."/>
            <person name="Hai N."/>
            <person name="Okamoto H."/>
            <person name="Sugawa H."/>
            <person name="Mori T."/>
        </authorList>
    </citation>
    <scope>VARIANT HYPERTHYROIDISM ARG-512</scope>
    <scope>CHARACTERIZATION OF VARIANT HYPERTHYROIDISM ARG-512</scope>
</reference>
<reference key="50">
    <citation type="journal article" date="2000" name="Eur. J. Immunogenet.">
        <title>Analysis of the genetic variability of the 1st (CCC/ACC, P52T) and the 10th exons (bp 1012-1704) of the TSH receptor gene in Graves' disease.</title>
        <authorList>
            <person name="Kaczur V."/>
            <person name="Takacs M."/>
            <person name="Szalai C."/>
            <person name="Falus A."/>
            <person name="Nagy Z."/>
            <person name="Berencsi G."/>
            <person name="Balazs C."/>
        </authorList>
    </citation>
    <scope>VARIANT THR-52</scope>
</reference>
<reference key="51">
    <citation type="journal article" date="2000" name="J. Clin. Endocrinol. Metab.">
        <title>Congenital hypothyroidism with impaired thyroid response to thyrotropin (TSH) and absent circulating thyroglobulin: evidence for a new inactivating mutation of the TSH receptor gene.</title>
        <authorList>
            <person name="Tonacchera M."/>
            <person name="Agretti P."/>
            <person name="Pinchera A."/>
            <person name="Rosellini V."/>
            <person name="Perri A."/>
            <person name="Collecchi P."/>
            <person name="Vitti P."/>
            <person name="Chiovato L."/>
        </authorList>
    </citation>
    <scope>VARIANT CHNG1 ILE-477</scope>
</reference>
<reference key="52">
    <citation type="journal article" date="2000" name="J. Clin. Endocrinol. Metab.">
        <title>Activating thyrotropin receptor mutations are present in nonadenomatous hyperfunctioning nodules of toxic or autonomous multinodular goiter.</title>
        <authorList>
            <person name="Tonacchera M."/>
            <person name="Agretti P."/>
            <person name="Chiovato L."/>
            <person name="Rosellini V."/>
            <person name="Ceccarini G."/>
            <person name="Perri A."/>
            <person name="Viacava P."/>
            <person name="Naccarato A.G."/>
            <person name="Miccoli P."/>
            <person name="Pinchera A."/>
            <person name="Vitti P."/>
        </authorList>
    </citation>
    <scope>VARIANTS HTNA ASN-281; MET-486; PHE-486; PHE-629; ALA-632; ILE-632; GLU-633 AND VAL-647</scope>
</reference>
<reference key="53">
    <citation type="journal article" date="2000" name="J. Clin. Endocrinol. Metab.">
        <title>Lack of association of nonautoimmune hyperfunctioning thyroid disorders and a germline polymorphism of codon 727 of the human thyrotropin receptor in a European Caucasian population.</title>
        <authorList>
            <person name="Muehlberg T."/>
            <person name="Herrmann K."/>
            <person name="Joba W."/>
            <person name="Kirchberger M."/>
            <person name="Heberling H.-J."/>
            <person name="Heufelder A.E."/>
        </authorList>
    </citation>
    <scope>VARIANT ASP-727</scope>
</reference>
<reference key="54">
    <citation type="journal article" date="2000" name="J. Clin. Endocrinol. Metab.">
        <title>A novel mutation in the thyrotropin (TSH) receptor gene causing loss of TSH binding but constitutive receptor activation in a family with resistance to TSH.</title>
        <authorList>
            <person name="Russo D."/>
            <person name="Betterle C."/>
            <person name="Arturi F."/>
            <person name="Chiefari E."/>
            <person name="Girelli M.E."/>
            <person name="Filetti S."/>
        </authorList>
    </citation>
    <scope>VARIANT CHNG1 CYS-310</scope>
</reference>
<reference key="55">
    <citation type="journal article" date="2000" name="Langenbecks Arch. Surg.">
        <title>Constitutively activating TSH-receptor mutations as a molecular cause of non-autoimmune hyperthyroidism in childhood.</title>
        <authorList>
            <person name="Biebermann H."/>
            <person name="Schoeneberg T."/>
            <person name="Krude H."/>
            <person name="Gudermann T."/>
            <person name="Grueters A."/>
        </authorList>
    </citation>
    <scope>VARIANTS HTNA ASN-281; SER-431 AND ILE-632</scope>
</reference>
<reference key="56">
    <citation type="journal article" date="2000" name="Thyroid">
        <title>Sporadic nonautoimmune congenital hyperthyroidism due to a strong activating mutation of the thyrotropin receptor gene.</title>
        <authorList>
            <person name="Tonacchera M."/>
            <person name="Agretti P."/>
            <person name="Rosellini V."/>
            <person name="Ceccarini G."/>
            <person name="Perri A."/>
            <person name="Zampolli M."/>
            <person name="Longhi R."/>
            <person name="Larizza D."/>
            <person name="Pinchera A."/>
            <person name="Vitti P."/>
            <person name="Chiovato L."/>
        </authorList>
    </citation>
    <scope>VARIANT HTNA THR-568</scope>
</reference>
<reference key="57">
    <citation type="journal article" date="2000" name="Thyroid">
        <title>A Phe 486 thyrotropin receptor mutation in an autonomously functioning follicular carcinoma that was causing hyperthyroidism.</title>
        <authorList>
            <person name="Camacho P."/>
            <person name="Gordon D."/>
            <person name="Chiefari E."/>
            <person name="Yong S."/>
            <person name="DeJong S."/>
            <person name="Pitale S."/>
            <person name="Russo D."/>
            <person name="Filetti S."/>
        </authorList>
    </citation>
    <scope>VARIANT FOLLICULAR CARCINOMA PHE-486</scope>
</reference>
<reference key="58">
    <citation type="journal article" date="2000" name="Thyroid">
        <title>Novel TSHR germline mutation (Met463Val) masquerading as Graves' disease in a large Welsh kindred with hyperthyroidism.</title>
        <authorList>
            <person name="Fuhrer D."/>
            <person name="Warner J."/>
            <person name="Sequeira M."/>
            <person name="Paschke R."/>
            <person name="Gregory J.W."/>
            <person name="Ludgate M."/>
        </authorList>
    </citation>
    <scope>VARIANT HTNA VAL-463</scope>
</reference>
<reference key="59">
    <citation type="journal article" date="2001" name="Eur. J. Endocrinol.">
        <title>A novel germline mutation in the TSH receptor gene causes non-autoimmune autosomal dominant hyperthyroidism.</title>
        <authorList>
            <person name="Alberti L."/>
            <person name="Proverbio M.C."/>
            <person name="Costagliola S."/>
            <person name="Weber G."/>
            <person name="Beck-Peccoz P."/>
            <person name="Chiumello G."/>
            <person name="Persani L."/>
        </authorList>
    </citation>
    <scope>VARIANT HTNA PHE-597</scope>
    <scope>CHARACTERIZATION OF VARIANT HTNA PHE-597</scope>
</reference>
<reference key="60">
    <citation type="journal article" date="2001" name="J. Clin. Endocrinol. Metab.">
        <title>The first activating TSH receptor mutation in transmembrane domain 1 identified in a family with nonautoimmune hyperthyroidism.</title>
        <authorList>
            <person name="Biebermann H."/>
            <person name="Schoeneberg T."/>
            <person name="Hess C."/>
            <person name="Germak J."/>
            <person name="Gudermann T."/>
            <person name="Grueters A."/>
        </authorList>
    </citation>
    <scope>VARIANT HTNA SER-431</scope>
    <scope>CHARACTERIZATION OF VARIANT HTNA SER-431</scope>
</reference>
<reference key="61">
    <citation type="journal article" date="2001" name="J. Mol. Med.">
        <title>Detection of thyroid-stimulating hormone receptor and G(s)alpha mutations: in 75 toxic thyroid nodules by denaturing gradient gel electrophoresis.</title>
        <authorList>
            <person name="Truelzsch B."/>
            <person name="Krohn K."/>
            <person name="Wonerow P."/>
            <person name="Chey S."/>
            <person name="Holzapfel H.-P."/>
            <person name="Ackermann F."/>
            <person name="Fuehrer D."/>
            <person name="Paschke R."/>
        </authorList>
    </citation>
    <scope>VARIANTS ASN-281; ILE-425; THR-453; PHE-486; ASN-505; ARG-512; GLN-512; THR-568; GLY-619; VAL-623; LEU-631; ALA-632; ILE-632; GLU-633; HIS-633; TYR-633; ALA-639 AND PHE-656</scope>
    <scope>CHARACTERIZATION OF VARIANTS ILE-425 AND GLN-512</scope>
</reference>
<reference key="62">
    <citation type="journal article" date="2001" name="Thyroid">
        <title>Novel inactivating missense mutations in the thyrotropin receptor gene in Japanese children with resistance to thyrotropin.</title>
        <authorList>
            <person name="Nagashima T."/>
            <person name="Murakami M."/>
            <person name="Onigata K."/>
            <person name="Morimura T."/>
            <person name="Nagashima K."/>
            <person name="Mori M."/>
            <person name="Morikawa A."/>
        </authorList>
    </citation>
    <scope>VARIANTS CHNG1 HIS-450 AND SER-498</scope>
</reference>
<reference key="63">
    <citation type="journal article" date="2002" name="Eur. J. Endocrinol.">
        <title>Oncogenic mutations in the thyrotropin receptor of autonomously functioning thyroid nodules in the Japanese population.</title>
        <authorList>
            <person name="Vanvooren V."/>
            <person name="Uchino S."/>
            <person name="Duprez L."/>
            <person name="Costa M.J."/>
            <person name="Vandekerckhove J."/>
            <person name="Parma J."/>
            <person name="Vassart G."/>
            <person name="Dumont J.E."/>
            <person name="van Sande J."/>
            <person name="Noguchi S."/>
        </authorList>
    </citation>
    <scope>VARIANTS HYPERTHYROIDISM THR-453; MET-486; ARG-512 AND ALA-632</scope>
</reference>
<reference key="64">
    <citation type="journal article" date="2002" name="J. Clin. Endocrinol. Metab.">
        <title>Germline mutations of TSH receptor gene as cause of nonautoimmune subclinical hypothyroidism.</title>
        <authorList>
            <person name="Alberti L."/>
            <person name="Proverbio M.C."/>
            <person name="Costagliola S."/>
            <person name="Romoli R."/>
            <person name="Boldrighini B."/>
            <person name="Vigone M.C."/>
            <person name="Weber G."/>
            <person name="Chiumello G."/>
            <person name="Beck-Peccoz P."/>
            <person name="Persani L."/>
        </authorList>
    </citation>
    <scope>VARIANTS CHNG1 SER-41; ALA-162; PRO-467 AND ARG-600</scope>
</reference>
<reference key="65">
    <citation type="journal article" date="2003" name="Biochem. Biophys. Res. Commun.">
        <title>Functional significance of the thyrotropin receptor germline polymorphism D727E.</title>
        <authorList>
            <person name="Sykiotis G.P."/>
            <person name="Neumann S."/>
            <person name="Georgopoulos N.A."/>
            <person name="Sgourou A."/>
            <person name="Papachatzopoulou A."/>
            <person name="Markou K.B."/>
            <person name="Kyriazopoulou V."/>
            <person name="Paschke R."/>
            <person name="Vagenakis A.G."/>
            <person name="Papavassiliou A.G."/>
        </authorList>
    </citation>
    <scope>VARIANT TOXIC THYROID ADENOMA ASN-593</scope>
    <scope>VARIANT ASP-727</scope>
    <scope>CHARACTERIZATION OF VARIANT TOXIC THYROID ADENOMA ASN-593</scope>
    <scope>CHARACTERIZATION OF VARIANT ASP-727</scope>
</reference>
<reference key="66">
    <citation type="journal article" date="2003" name="J. Clin. Endocrinol. Metab.">
        <title>Polymorphisms in thyroid hormone pathway genes are associated with plasma TSH and iodothyronine levels in healthy subjects.</title>
        <authorList>
            <person name="Peeters R.P."/>
            <person name="van Toor H."/>
            <person name="Klootwijk W."/>
            <person name="de Rijke Y.B."/>
            <person name="Kuiper G.G.J.M."/>
            <person name="Uitterlinden A.G."/>
            <person name="Visser T.J."/>
        </authorList>
    </citation>
    <scope>VARIANTS HIS-36; THR-52 AND ASP-727</scope>
    <scope>ASSOCIATION WITH PLASMA TSH LEVEL</scope>
</reference>
<reference key="67">
    <citation type="journal article" date="2003" name="J. Endocrinol. Invest.">
        <title>TSH receptor and Gs(alpha) genetic analysis in children with Down's syndrome and subclinical hypothyroidism.</title>
        <authorList>
            <person name="Tonacchera M."/>
            <person name="Perri A."/>
            <person name="De Marco G."/>
            <person name="Agretti P."/>
            <person name="Montanelli L."/>
            <person name="Banco M.E."/>
            <person name="Corrias A."/>
            <person name="Bellone J."/>
            <person name="Tosi M.T."/>
            <person name="Vitti P."/>
            <person name="Martino E."/>
            <person name="Pinchera A."/>
            <person name="Chiovato L."/>
        </authorList>
    </citation>
    <scope>VARIANTS HIS-36 AND THR-52</scope>
    <scope>RECEPTOR GENETIC ANALYSIS IN CHILDREN WITH DOWN'S SYNDROME</scope>
</reference>
<reference key="68">
    <citation type="journal article" date="2004" name="Clin. Endocrinol. (Oxf.)">
        <title>Congenital hypothyroidism and apparent athyreosis with compound heterozygosity or compensated hypothyroidism with probable hemizygosity for inactivating mutations of the TSH receptor.</title>
        <authorList>
            <person name="Park S.-M."/>
            <person name="Clifton-Bligh R.J."/>
            <person name="Betts P."/>
            <person name="Chatterjee V.K.K."/>
        </authorList>
    </citation>
    <scope>VARIANT CHNG1 THR-553</scope>
</reference>
<reference key="69">
    <citation type="journal article" date="2004" name="Clin. Endocrinol. (Oxf.)">
        <title>Premature birth and low birth weight associated with nonautoimmune hyperthyroidism due to an activating thyrotropin receptor gene mutation.</title>
        <authorList>
            <person name="Vaidya B."/>
            <person name="Campbell V."/>
            <person name="Tripp J.H."/>
            <person name="Spyer G."/>
            <person name="Hattersley A.T."/>
            <person name="Ellard S."/>
        </authorList>
    </citation>
    <scope>VARIANT HTNA ASN-505</scope>
</reference>
<reference key="70">
    <citation type="journal article" date="2004" name="J. Clin. Endocrinol. Metab.">
        <title>Low prevalence of thyrotropin receptor mutations in a large series of subjects with sporadic and familial nonautoimmune subclinical hypothyroidism.</title>
        <authorList>
            <person name="Tonacchera M."/>
            <person name="Perri A."/>
            <person name="De Marco G."/>
            <person name="Agretti P."/>
            <person name="Banco M.E."/>
            <person name="Di Cosmo C."/>
            <person name="Grasso L."/>
            <person name="Vitti P."/>
            <person name="Chiovato L."/>
            <person name="Pinchera A."/>
        </authorList>
    </citation>
    <scope>VARIANTS CHNG1 ALA-162 AND PRO-252</scope>
    <scope>CHARACTERIZATION OF VARIANT CHNG1 PRO-252</scope>
</reference>
<reference key="71">
    <citation type="journal article" date="2015" name="J. Clin. Endocrinol. Metab.">
        <title>Loss-of-function variants in a Hungarian cohort reveal structural insights on TSH receptor maturation and signaling.</title>
        <authorList>
            <person name="Labadi A."/>
            <person name="Grassi E.S."/>
            <person name="Gellen B."/>
            <person name="Kleinau G."/>
            <person name="Biebermann H."/>
            <person name="Ruzsa B."/>
            <person name="Gelmini G."/>
            <person name="Rideg O."/>
            <person name="Miseta A."/>
            <person name="Kovacs G.L."/>
            <person name="Patocs A."/>
            <person name="Felszeghy E."/>
            <person name="Nagy E.V."/>
            <person name="Mezosi E."/>
            <person name="Persani L."/>
        </authorList>
    </citation>
    <scope>VARIANTS CHNG1 ALA-162; ASP-432 AND LEU-449</scope>
    <scope>CHARACTERIZATION OF VARIANTS CHNG1 ASP-432 AND LEU-449</scope>
</reference>
<sequence>MRPADLLQLVLLLDLPRDLGGMGCSSPPCECHQEEDFRVTCKDIQRIPSLPPSTQTLKLIETHLRTIPSHAFSNLPNISRIYVSIDVTLQQLESHSFYNLSKVTHIEIRNTRNLTYIDPDALKELPLLKFLGIFNTGLKMFPDLTKVYSTDIFFILEITDNPYMTSIPVNAFQGLCNETLTLKLYNNGFTSVQGYAFNGTKLDAVYLNKNKYLTVIDKDAFGGVYSGPSLLDVSQTSVTALPSKGLEHLKELIARNTWTLKKLPLSLSFLHLTRADLSYPSHCCAFKNQKKIRGILESLMCNESSMQSLRQRKSVNALNSPLHQEYEENLGDSIVGYKEKSKFQDTHNNAHYYVFFEEQEDEIIGFGQELKNPQEETLQAFDSHYDYTICGDSEDMVCTPKSDEFNPCEDIMGYKFLRIVVWFVSLLALLGNVFVLLILLTSHYKLNVPRFLMCNLAFADFCMGMYLLLIASVDLYTHSEYYNHAIDWQTGPGCNTAGFFTVFASELSVYTLTVITLERWYAITFAMRLDRKIRLRHACAIMVGGWVCCFLLALLPLVGISSYAKVSICLPMDTETPLALAYIVFVLTLNIVAFVIVCCCYVKIYITVRNPQYNPGDKDTKIAKRMAVLIFTDFICMAPISFYALSAILNKPLITVSNSKILLVLFYPLNSCANPFLYAIFTKAFQRDVFILLSKFGICKRQAQAYRGQRVPPKNSTDIQVQKVTHEMRQGLHNMEDVYELIENSHLTPKKQGQISEEYMQTVL</sequence>
<gene>
    <name type="primary">TSHR</name>
    <name type="synonym">LGR3</name>
</gene>
<evidence type="ECO:0000250" key="1">
    <source>
        <dbReference type="UniProtKB" id="P21463"/>
    </source>
</evidence>
<evidence type="ECO:0000255" key="2"/>
<evidence type="ECO:0000255" key="3">
    <source>
        <dbReference type="PROSITE-ProRule" id="PRU00521"/>
    </source>
</evidence>
<evidence type="ECO:0000269" key="4">
    <source>
    </source>
</evidence>
<evidence type="ECO:0000269" key="5">
    <source>
    </source>
</evidence>
<evidence type="ECO:0000269" key="6">
    <source>
    </source>
</evidence>
<evidence type="ECO:0000269" key="7">
    <source>
    </source>
</evidence>
<evidence type="ECO:0000269" key="8">
    <source>
    </source>
</evidence>
<evidence type="ECO:0000269" key="9">
    <source>
    </source>
</evidence>
<evidence type="ECO:0000269" key="10">
    <source>
    </source>
</evidence>
<evidence type="ECO:0000269" key="11">
    <source>
    </source>
</evidence>
<evidence type="ECO:0000269" key="12">
    <source>
    </source>
</evidence>
<evidence type="ECO:0000269" key="13">
    <source>
    </source>
</evidence>
<evidence type="ECO:0000269" key="14">
    <source>
    </source>
</evidence>
<evidence type="ECO:0000269" key="15">
    <source>
    </source>
</evidence>
<evidence type="ECO:0000269" key="16">
    <source>
    </source>
</evidence>
<evidence type="ECO:0000269" key="17">
    <source>
    </source>
</evidence>
<evidence type="ECO:0000269" key="18">
    <source>
    </source>
</evidence>
<evidence type="ECO:0000269" key="19">
    <source>
    </source>
</evidence>
<evidence type="ECO:0000269" key="20">
    <source>
    </source>
</evidence>
<evidence type="ECO:0000269" key="21">
    <source>
    </source>
</evidence>
<evidence type="ECO:0000269" key="22">
    <source>
    </source>
</evidence>
<evidence type="ECO:0000269" key="23">
    <source>
    </source>
</evidence>
<evidence type="ECO:0000269" key="24">
    <source>
    </source>
</evidence>
<evidence type="ECO:0000269" key="25">
    <source>
    </source>
</evidence>
<evidence type="ECO:0000269" key="26">
    <source>
    </source>
</evidence>
<evidence type="ECO:0000269" key="27">
    <source>
    </source>
</evidence>
<evidence type="ECO:0000269" key="28">
    <source>
    </source>
</evidence>
<evidence type="ECO:0000269" key="29">
    <source>
    </source>
</evidence>
<evidence type="ECO:0000269" key="30">
    <source>
    </source>
</evidence>
<evidence type="ECO:0000269" key="31">
    <source>
    </source>
</evidence>
<evidence type="ECO:0000269" key="32">
    <source>
    </source>
</evidence>
<evidence type="ECO:0000269" key="33">
    <source>
    </source>
</evidence>
<evidence type="ECO:0000269" key="34">
    <source>
    </source>
</evidence>
<evidence type="ECO:0000269" key="35">
    <source>
    </source>
</evidence>
<evidence type="ECO:0000269" key="36">
    <source>
    </source>
</evidence>
<evidence type="ECO:0000269" key="37">
    <source>
    </source>
</evidence>
<evidence type="ECO:0000269" key="38">
    <source>
    </source>
</evidence>
<evidence type="ECO:0000269" key="39">
    <source>
    </source>
</evidence>
<evidence type="ECO:0000269" key="40">
    <source>
    </source>
</evidence>
<evidence type="ECO:0000269" key="41">
    <source>
    </source>
</evidence>
<evidence type="ECO:0000269" key="42">
    <source>
    </source>
</evidence>
<evidence type="ECO:0000269" key="43">
    <source>
    </source>
</evidence>
<evidence type="ECO:0000269" key="44">
    <source>
    </source>
</evidence>
<evidence type="ECO:0000269" key="45">
    <source>
    </source>
</evidence>
<evidence type="ECO:0000269" key="46">
    <source>
    </source>
</evidence>
<evidence type="ECO:0000269" key="47">
    <source>
    </source>
</evidence>
<evidence type="ECO:0000269" key="48">
    <source>
    </source>
</evidence>
<evidence type="ECO:0000269" key="49">
    <source>
    </source>
</evidence>
<evidence type="ECO:0000269" key="50">
    <source>
    </source>
</evidence>
<evidence type="ECO:0000269" key="51">
    <source>
    </source>
</evidence>
<evidence type="ECO:0000269" key="52">
    <source>
    </source>
</evidence>
<evidence type="ECO:0000269" key="53">
    <source>
    </source>
</evidence>
<evidence type="ECO:0000269" key="54">
    <source>
    </source>
</evidence>
<evidence type="ECO:0000269" key="55">
    <source>
    </source>
</evidence>
<evidence type="ECO:0000269" key="56">
    <source>
    </source>
</evidence>
<evidence type="ECO:0000269" key="57">
    <source>
    </source>
</evidence>
<evidence type="ECO:0000269" key="58">
    <source>
    </source>
</evidence>
<evidence type="ECO:0000269" key="59">
    <source>
    </source>
</evidence>
<evidence type="ECO:0000269" key="60">
    <source>
    </source>
</evidence>
<evidence type="ECO:0000269" key="61">
    <source>
    </source>
</evidence>
<evidence type="ECO:0000269" key="62">
    <source>
    </source>
</evidence>
<evidence type="ECO:0000269" key="63">
    <source>
    </source>
</evidence>
<evidence type="ECO:0000269" key="64">
    <source>
    </source>
</evidence>
<evidence type="ECO:0000269" key="65">
    <source>
    </source>
</evidence>
<evidence type="ECO:0000269" key="66">
    <source>
    </source>
</evidence>
<evidence type="ECO:0000269" key="67">
    <source ref="7"/>
</evidence>
<evidence type="ECO:0000303" key="68">
    <source>
    </source>
</evidence>
<evidence type="ECO:0000303" key="69">
    <source>
    </source>
</evidence>
<evidence type="ECO:0000303" key="70">
    <source>
    </source>
</evidence>
<evidence type="ECO:0000305" key="71"/>
<evidence type="ECO:0000305" key="72">
    <source>
    </source>
</evidence>
<evidence type="ECO:0007829" key="73">
    <source>
        <dbReference type="PDB" id="2XWT"/>
    </source>
</evidence>
<evidence type="ECO:0007829" key="74">
    <source>
        <dbReference type="PDB" id="3G04"/>
    </source>
</evidence>
<evidence type="ECO:0007829" key="75">
    <source>
        <dbReference type="PDB" id="7T9M"/>
    </source>
</evidence>
<evidence type="ECO:0007829" key="76">
    <source>
        <dbReference type="PDB" id="7T9N"/>
    </source>
</evidence>
<evidence type="ECO:0007829" key="77">
    <source>
        <dbReference type="PDB" id="7UTZ"/>
    </source>
</evidence>
<evidence type="ECO:0007829" key="78">
    <source>
        <dbReference type="PDB" id="7XW6"/>
    </source>
</evidence>
<dbReference type="EMBL" id="M31774">
    <property type="protein sequence ID" value="AAA36783.1"/>
    <property type="molecule type" value="mRNA"/>
</dbReference>
<dbReference type="EMBL" id="M32215">
    <property type="protein sequence ID" value="AAA61236.1"/>
    <property type="molecule type" value="mRNA"/>
</dbReference>
<dbReference type="EMBL" id="M73747">
    <property type="protein sequence ID" value="AAA70232.1"/>
    <property type="status" value="ALT_FRAME"/>
    <property type="molecule type" value="mRNA"/>
</dbReference>
<dbReference type="EMBL" id="S45272">
    <property type="protein sequence ID" value="AAB23390.2"/>
    <property type="molecule type" value="mRNA"/>
</dbReference>
<dbReference type="EMBL" id="S49816">
    <property type="protein sequence ID" value="AAB24246.1"/>
    <property type="molecule type" value="mRNA"/>
</dbReference>
<dbReference type="EMBL" id="AY429111">
    <property type="protein sequence ID" value="AAR07906.1"/>
    <property type="molecule type" value="mRNA"/>
</dbReference>
<dbReference type="EMBL" id="AC007262">
    <property type="protein sequence ID" value="AAD31568.1"/>
    <property type="molecule type" value="Genomic_DNA"/>
</dbReference>
<dbReference type="EMBL" id="AC010072">
    <property type="protein sequence ID" value="AAF09032.1"/>
    <property type="molecule type" value="Genomic_DNA"/>
</dbReference>
<dbReference type="EMBL" id="AC010582">
    <property type="protein sequence ID" value="AAF26775.1"/>
    <property type="molecule type" value="Genomic_DNA"/>
</dbReference>
<dbReference type="EMBL" id="AL136040">
    <property type="status" value="NOT_ANNOTATED_CDS"/>
    <property type="molecule type" value="Genomic_DNA"/>
</dbReference>
<dbReference type="EMBL" id="BC009237">
    <property type="protein sequence ID" value="AAH09237.1"/>
    <property type="molecule type" value="mRNA"/>
</dbReference>
<dbReference type="EMBL" id="BC024205">
    <property type="protein sequence ID" value="AAH24205.1"/>
    <property type="molecule type" value="mRNA"/>
</dbReference>
<dbReference type="EMBL" id="BC063613">
    <property type="protein sequence ID" value="AAH63613.1"/>
    <property type="molecule type" value="mRNA"/>
</dbReference>
<dbReference type="EMBL" id="BC108653">
    <property type="protein sequence ID" value="AAI08654.1"/>
    <property type="molecule type" value="mRNA"/>
</dbReference>
<dbReference type="EMBL" id="BC120973">
    <property type="protein sequence ID" value="AAI20974.1"/>
    <property type="molecule type" value="mRNA"/>
</dbReference>
<dbReference type="EMBL" id="BC127628">
    <property type="protein sequence ID" value="AAI27629.1"/>
    <property type="molecule type" value="mRNA"/>
</dbReference>
<dbReference type="EMBL" id="BC141970">
    <property type="protein sequence ID" value="AAI41971.1"/>
    <property type="molecule type" value="mRNA"/>
</dbReference>
<dbReference type="CCDS" id="CCDS32131.1">
    <molecule id="P16473-2"/>
</dbReference>
<dbReference type="CCDS" id="CCDS55935.1">
    <molecule id="P16473-3"/>
</dbReference>
<dbReference type="CCDS" id="CCDS9872.1">
    <molecule id="P16473-1"/>
</dbReference>
<dbReference type="PIR" id="A33789">
    <property type="entry name" value="QRHURH"/>
</dbReference>
<dbReference type="PIR" id="JC1319">
    <property type="entry name" value="JC1319"/>
</dbReference>
<dbReference type="PIR" id="T01787">
    <property type="entry name" value="T01787"/>
</dbReference>
<dbReference type="RefSeq" id="NP_000360.2">
    <molecule id="P16473-1"/>
    <property type="nucleotide sequence ID" value="NM_000369.5"/>
</dbReference>
<dbReference type="RefSeq" id="NP_001018046.1">
    <molecule id="P16473-2"/>
    <property type="nucleotide sequence ID" value="NM_001018036.3"/>
</dbReference>
<dbReference type="RefSeq" id="NP_001136098.1">
    <molecule id="P16473-3"/>
    <property type="nucleotide sequence ID" value="NM_001142626.3"/>
</dbReference>
<dbReference type="RefSeq" id="XP_005268094.1">
    <property type="nucleotide sequence ID" value="XM_005268037.4"/>
</dbReference>
<dbReference type="RefSeq" id="XP_005268096.1">
    <property type="nucleotide sequence ID" value="XM_005268039.1"/>
</dbReference>
<dbReference type="RefSeq" id="XP_006720308.1">
    <property type="nucleotide sequence ID" value="XM_006720245.1"/>
</dbReference>
<dbReference type="PDB" id="2XWT">
    <property type="method" value="X-ray"/>
    <property type="resolution" value="1.90 A"/>
    <property type="chains" value="C=22-260"/>
</dbReference>
<dbReference type="PDB" id="3G04">
    <property type="method" value="X-ray"/>
    <property type="resolution" value="2.55 A"/>
    <property type="chains" value="C=22-260"/>
</dbReference>
<dbReference type="PDB" id="7T9I">
    <property type="method" value="EM"/>
    <property type="resolution" value="2.90 A"/>
    <property type="chains" value="R=22-764"/>
</dbReference>
<dbReference type="PDB" id="7T9M">
    <property type="method" value="EM"/>
    <property type="resolution" value="3.10 A"/>
    <property type="chains" value="R=22-764"/>
</dbReference>
<dbReference type="PDB" id="7T9N">
    <property type="method" value="EM"/>
    <property type="resolution" value="2.90 A"/>
    <property type="chains" value="R=22-764"/>
</dbReference>
<dbReference type="PDB" id="7UTZ">
    <property type="method" value="EM"/>
    <property type="resolution" value="2.40 A"/>
    <property type="chains" value="R=21-764"/>
</dbReference>
<dbReference type="PDB" id="7XW5">
    <property type="method" value="EM"/>
    <property type="resolution" value="2.96 A"/>
    <property type="chains" value="R=21-764"/>
</dbReference>
<dbReference type="PDB" id="7XW6">
    <property type="method" value="EM"/>
    <property type="resolution" value="2.78 A"/>
    <property type="chains" value="R=21-764"/>
</dbReference>
<dbReference type="PDB" id="7XW7">
    <property type="method" value="EM"/>
    <property type="resolution" value="5.50 A"/>
    <property type="chains" value="R=21-764"/>
</dbReference>
<dbReference type="PDBsum" id="2XWT"/>
<dbReference type="PDBsum" id="3G04"/>
<dbReference type="PDBsum" id="7T9I"/>
<dbReference type="PDBsum" id="7T9M"/>
<dbReference type="PDBsum" id="7T9N"/>
<dbReference type="PDBsum" id="7UTZ"/>
<dbReference type="PDBsum" id="7XW5"/>
<dbReference type="PDBsum" id="7XW6"/>
<dbReference type="PDBsum" id="7XW7"/>
<dbReference type="EMDB" id="EMD-25758"/>
<dbReference type="EMDB" id="EMD-25762"/>
<dbReference type="EMDB" id="EMD-25763"/>
<dbReference type="EMDB" id="EMD-26795"/>
<dbReference type="EMDB" id="EMD-27640"/>
<dbReference type="EMDB" id="EMD-33491"/>
<dbReference type="EMDB" id="EMD-33492"/>
<dbReference type="EMDB" id="EMD-33493"/>
<dbReference type="SMR" id="P16473"/>
<dbReference type="BioGRID" id="113104">
    <property type="interactions" value="109"/>
</dbReference>
<dbReference type="CORUM" id="P16473"/>
<dbReference type="FunCoup" id="P16473">
    <property type="interactions" value="720"/>
</dbReference>
<dbReference type="IntAct" id="P16473">
    <property type="interactions" value="68"/>
</dbReference>
<dbReference type="MINT" id="P16473"/>
<dbReference type="STRING" id="9606.ENSP00000441235"/>
<dbReference type="BindingDB" id="P16473"/>
<dbReference type="ChEMBL" id="CHEMBL1963"/>
<dbReference type="DrugBank" id="DB00024">
    <property type="generic name" value="Thyrotropin alfa"/>
</dbReference>
<dbReference type="DrugCentral" id="P16473"/>
<dbReference type="GuidetoPHARMACOLOGY" id="255"/>
<dbReference type="TCDB" id="9.A.14.1.21">
    <property type="family name" value="the g-protein-coupled receptor (gpcr) family"/>
</dbReference>
<dbReference type="GlyCosmos" id="P16473">
    <property type="glycosylation" value="6 sites, No reported glycans"/>
</dbReference>
<dbReference type="GlyGen" id="P16473">
    <property type="glycosylation" value="11 sites, 2 N-linked glycans (1 site)"/>
</dbReference>
<dbReference type="iPTMnet" id="P16473"/>
<dbReference type="PhosphoSitePlus" id="P16473"/>
<dbReference type="SwissPalm" id="P16473"/>
<dbReference type="BioMuta" id="TSHR"/>
<dbReference type="DMDM" id="62298994"/>
<dbReference type="jPOST" id="P16473"/>
<dbReference type="MassIVE" id="P16473"/>
<dbReference type="PaxDb" id="9606-ENSP00000441235"/>
<dbReference type="PeptideAtlas" id="P16473"/>
<dbReference type="ProteomicsDB" id="24847"/>
<dbReference type="ProteomicsDB" id="32578"/>
<dbReference type="ProteomicsDB" id="53374">
    <molecule id="P16473-1"/>
</dbReference>
<dbReference type="ProteomicsDB" id="53375">
    <molecule id="P16473-2"/>
</dbReference>
<dbReference type="ABCD" id="P16473">
    <property type="antibodies" value="14 sequenced antibodies"/>
</dbReference>
<dbReference type="Antibodypedia" id="4379">
    <property type="antibodies" value="1172 antibodies from 38 providers"/>
</dbReference>
<dbReference type="DNASU" id="7253"/>
<dbReference type="Ensembl" id="ENST00000298171.7">
    <molecule id="P16473-1"/>
    <property type="protein sequence ID" value="ENSP00000298171.2"/>
    <property type="gene ID" value="ENSG00000165409.18"/>
</dbReference>
<dbReference type="Ensembl" id="ENST00000342443.10">
    <molecule id="P16473-2"/>
    <property type="protein sequence ID" value="ENSP00000340113.6"/>
    <property type="gene ID" value="ENSG00000165409.18"/>
</dbReference>
<dbReference type="Ensembl" id="ENST00000541158.6">
    <molecule id="P16473-1"/>
    <property type="protein sequence ID" value="ENSP00000441235.2"/>
    <property type="gene ID" value="ENSG00000165409.18"/>
</dbReference>
<dbReference type="Ensembl" id="ENST00000554435.1">
    <molecule id="P16473-3"/>
    <property type="protein sequence ID" value="ENSP00000450549.1"/>
    <property type="gene ID" value="ENSG00000165409.18"/>
</dbReference>
<dbReference type="GeneID" id="7253"/>
<dbReference type="KEGG" id="hsa:7253"/>
<dbReference type="MANE-Select" id="ENST00000298171.7">
    <property type="protein sequence ID" value="ENSP00000298171.2"/>
    <property type="RefSeq nucleotide sequence ID" value="NM_000369.5"/>
    <property type="RefSeq protein sequence ID" value="NP_000360.2"/>
</dbReference>
<dbReference type="UCSC" id="uc001xvc.4">
    <molecule id="P16473-1"/>
    <property type="organism name" value="human"/>
</dbReference>
<dbReference type="AGR" id="HGNC:12373"/>
<dbReference type="CTD" id="7253"/>
<dbReference type="DisGeNET" id="7253"/>
<dbReference type="GeneCards" id="TSHR"/>
<dbReference type="HGNC" id="HGNC:12373">
    <property type="gene designation" value="TSHR"/>
</dbReference>
<dbReference type="HPA" id="ENSG00000165409">
    <property type="expression patterns" value="Tissue enriched (thyroid)"/>
</dbReference>
<dbReference type="MalaCards" id="TSHR"/>
<dbReference type="MIM" id="275200">
    <property type="type" value="phenotype"/>
</dbReference>
<dbReference type="MIM" id="603372">
    <property type="type" value="gene+phenotype"/>
</dbReference>
<dbReference type="MIM" id="603373">
    <property type="type" value="phenotype"/>
</dbReference>
<dbReference type="MIM" id="609152">
    <property type="type" value="phenotype"/>
</dbReference>
<dbReference type="neXtProt" id="NX_P16473"/>
<dbReference type="OpenTargets" id="ENSG00000165409"/>
<dbReference type="Orphanet" id="95713">
    <property type="disease" value="Athyreosis"/>
</dbReference>
<dbReference type="Orphanet" id="99819">
    <property type="disease" value="Familial gestational hyperthyroidism"/>
</dbReference>
<dbReference type="Orphanet" id="424">
    <property type="disease" value="Familial hyperthyroidism due to mutations in TSH receptor"/>
</dbReference>
<dbReference type="Orphanet" id="90673">
    <property type="disease" value="Hypothyroidism due to TSH receptor mutations"/>
</dbReference>
<dbReference type="Orphanet" id="95720">
    <property type="disease" value="Thyroid hypoplasia"/>
</dbReference>
<dbReference type="PharmGKB" id="PA37042"/>
<dbReference type="VEuPathDB" id="HostDB:ENSG00000165409"/>
<dbReference type="eggNOG" id="KOG2087">
    <property type="taxonomic scope" value="Eukaryota"/>
</dbReference>
<dbReference type="GeneTree" id="ENSGT00940000156510"/>
<dbReference type="HOGENOM" id="CLU_006130_1_1_1"/>
<dbReference type="InParanoid" id="P16473"/>
<dbReference type="OMA" id="TRDMRQS"/>
<dbReference type="OrthoDB" id="5981530at2759"/>
<dbReference type="PAN-GO" id="P16473">
    <property type="GO annotations" value="6 GO annotations based on evolutionary models"/>
</dbReference>
<dbReference type="PhylomeDB" id="P16473"/>
<dbReference type="TreeFam" id="TF316814"/>
<dbReference type="PathwayCommons" id="P16473"/>
<dbReference type="Reactome" id="R-HSA-375281">
    <property type="pathway name" value="Hormone ligand-binding receptors"/>
</dbReference>
<dbReference type="Reactome" id="R-HSA-418555">
    <property type="pathway name" value="G alpha (s) signalling events"/>
</dbReference>
<dbReference type="SignaLink" id="P16473"/>
<dbReference type="SIGNOR" id="P16473"/>
<dbReference type="BioGRID-ORCS" id="7253">
    <property type="hits" value="11 hits in 1154 CRISPR screens"/>
</dbReference>
<dbReference type="ChiTaRS" id="TSHR">
    <property type="organism name" value="human"/>
</dbReference>
<dbReference type="EvolutionaryTrace" id="P16473"/>
<dbReference type="GeneWiki" id="Thyrotropin_receptor"/>
<dbReference type="GenomeRNAi" id="7253"/>
<dbReference type="Pharos" id="P16473">
    <property type="development level" value="Tclin"/>
</dbReference>
<dbReference type="PRO" id="PR:P16473"/>
<dbReference type="Proteomes" id="UP000005640">
    <property type="component" value="Chromosome 14"/>
</dbReference>
<dbReference type="RNAct" id="P16473">
    <property type="molecule type" value="protein"/>
</dbReference>
<dbReference type="Bgee" id="ENSG00000165409">
    <property type="expression patterns" value="Expressed in left lobe of thyroid gland and 109 other cell types or tissues"/>
</dbReference>
<dbReference type="ExpressionAtlas" id="P16473">
    <property type="expression patterns" value="baseline and differential"/>
</dbReference>
<dbReference type="GO" id="GO:0016323">
    <property type="term" value="C:basolateral plasma membrane"/>
    <property type="evidence" value="ECO:0000314"/>
    <property type="project" value="UniProtKB"/>
</dbReference>
<dbReference type="GO" id="GO:0009986">
    <property type="term" value="C:cell surface"/>
    <property type="evidence" value="ECO:0000250"/>
    <property type="project" value="UniProtKB"/>
</dbReference>
<dbReference type="GO" id="GO:0005886">
    <property type="term" value="C:plasma membrane"/>
    <property type="evidence" value="ECO:0000314"/>
    <property type="project" value="UniProtKB"/>
</dbReference>
<dbReference type="GO" id="GO:0043235">
    <property type="term" value="C:receptor complex"/>
    <property type="evidence" value="ECO:0000314"/>
    <property type="project" value="MGI"/>
</dbReference>
<dbReference type="GO" id="GO:0008528">
    <property type="term" value="F:G protein-coupled peptide receptor activity"/>
    <property type="evidence" value="ECO:0000318"/>
    <property type="project" value="GO_Central"/>
</dbReference>
<dbReference type="GO" id="GO:0044877">
    <property type="term" value="F:protein-containing complex binding"/>
    <property type="evidence" value="ECO:0000314"/>
    <property type="project" value="UniProtKB"/>
</dbReference>
<dbReference type="GO" id="GO:0038023">
    <property type="term" value="F:signaling receptor activity"/>
    <property type="evidence" value="ECO:0000315"/>
    <property type="project" value="UniProtKB"/>
</dbReference>
<dbReference type="GO" id="GO:0004996">
    <property type="term" value="F:thyroid-stimulating hormone receptor activity"/>
    <property type="evidence" value="ECO:0000315"/>
    <property type="project" value="UniProtKB"/>
</dbReference>
<dbReference type="GO" id="GO:0007189">
    <property type="term" value="P:adenylate cyclase-activating G protein-coupled receptor signaling pathway"/>
    <property type="evidence" value="ECO:0000315"/>
    <property type="project" value="UniProtKB"/>
</dbReference>
<dbReference type="GO" id="GO:0007166">
    <property type="term" value="P:cell surface receptor signaling pathway"/>
    <property type="evidence" value="ECO:0000315"/>
    <property type="project" value="UniProtKB"/>
</dbReference>
<dbReference type="GO" id="GO:0007267">
    <property type="term" value="P:cell-cell signaling"/>
    <property type="evidence" value="ECO:0000304"/>
    <property type="project" value="ProtInc"/>
</dbReference>
<dbReference type="GO" id="GO:1904588">
    <property type="term" value="P:cellular response to glycoprotein"/>
    <property type="evidence" value="ECO:0000315"/>
    <property type="project" value="UniProtKB"/>
</dbReference>
<dbReference type="GO" id="GO:1905229">
    <property type="term" value="P:cellular response to thyrotropin-releasing hormone"/>
    <property type="evidence" value="ECO:0000315"/>
    <property type="project" value="UniProtKB"/>
</dbReference>
<dbReference type="GO" id="GO:0007186">
    <property type="term" value="P:G protein-coupled receptor signaling pathway"/>
    <property type="evidence" value="ECO:0000304"/>
    <property type="project" value="ProtInc"/>
</dbReference>
<dbReference type="GO" id="GO:0007187">
    <property type="term" value="P:G protein-coupled receptor signaling pathway, coupled to cyclic nucleotide second messenger"/>
    <property type="evidence" value="ECO:0000304"/>
    <property type="project" value="ProtInc"/>
</dbReference>
<dbReference type="GO" id="GO:0009755">
    <property type="term" value="P:hormone-mediated signaling pathway"/>
    <property type="evidence" value="ECO:0000318"/>
    <property type="project" value="GO_Central"/>
</dbReference>
<dbReference type="GO" id="GO:0008284">
    <property type="term" value="P:positive regulation of cell population proliferation"/>
    <property type="evidence" value="ECO:0000304"/>
    <property type="project" value="ProtInc"/>
</dbReference>
<dbReference type="GO" id="GO:0120162">
    <property type="term" value="P:positive regulation of cold-induced thermogenesis"/>
    <property type="evidence" value="ECO:0000250"/>
    <property type="project" value="YuBioLab"/>
</dbReference>
<dbReference type="GO" id="GO:0038194">
    <property type="term" value="P:thyroid-stimulating hormone signaling pathway"/>
    <property type="evidence" value="ECO:0000315"/>
    <property type="project" value="UniProtKB"/>
</dbReference>
<dbReference type="CDD" id="cd15964">
    <property type="entry name" value="7tmA_TSH-R"/>
    <property type="match status" value="1"/>
</dbReference>
<dbReference type="FunFam" id="1.20.1070.10:FF:000019">
    <property type="entry name" value="Lutropin-choriogonadotropic hormone receptor"/>
    <property type="match status" value="1"/>
</dbReference>
<dbReference type="FunFam" id="3.80.10.10:FF:000176">
    <property type="entry name" value="Thyrotropin receptor"/>
    <property type="match status" value="1"/>
</dbReference>
<dbReference type="Gene3D" id="1.20.1070.10">
    <property type="entry name" value="Rhodopsin 7-helix transmembrane proteins"/>
    <property type="match status" value="1"/>
</dbReference>
<dbReference type="Gene3D" id="3.80.10.10">
    <property type="entry name" value="Ribonuclease Inhibitor"/>
    <property type="match status" value="1"/>
</dbReference>
<dbReference type="InterPro" id="IPR000276">
    <property type="entry name" value="GPCR_Rhodpsn"/>
</dbReference>
<dbReference type="InterPro" id="IPR017452">
    <property type="entry name" value="GPCR_Rhodpsn_7TM"/>
</dbReference>
<dbReference type="InterPro" id="IPR002131">
    <property type="entry name" value="Gphrmn_rcpt_fam"/>
</dbReference>
<dbReference type="InterPro" id="IPR026906">
    <property type="entry name" value="LRR_5"/>
</dbReference>
<dbReference type="InterPro" id="IPR032675">
    <property type="entry name" value="LRR_dom_sf"/>
</dbReference>
<dbReference type="InterPro" id="IPR002274">
    <property type="entry name" value="TSH_rcpt"/>
</dbReference>
<dbReference type="PANTHER" id="PTHR24372">
    <property type="entry name" value="GLYCOPROTEIN HORMONE RECEPTOR"/>
    <property type="match status" value="1"/>
</dbReference>
<dbReference type="PANTHER" id="PTHR24372:SF0">
    <property type="entry name" value="THYROTROPIN RECEPTOR"/>
    <property type="match status" value="1"/>
</dbReference>
<dbReference type="Pfam" id="PF00001">
    <property type="entry name" value="7tm_1"/>
    <property type="match status" value="1"/>
</dbReference>
<dbReference type="Pfam" id="PF13306">
    <property type="entry name" value="LRR_5"/>
    <property type="match status" value="2"/>
</dbReference>
<dbReference type="PRINTS" id="PR00373">
    <property type="entry name" value="GLYCHORMONER"/>
</dbReference>
<dbReference type="PRINTS" id="PR00237">
    <property type="entry name" value="GPCRRHODOPSN"/>
</dbReference>
<dbReference type="PRINTS" id="PR01145">
    <property type="entry name" value="TSHRECEPTOR"/>
</dbReference>
<dbReference type="SUPFAM" id="SSF81321">
    <property type="entry name" value="Family A G protein-coupled receptor-like"/>
    <property type="match status" value="1"/>
</dbReference>
<dbReference type="SUPFAM" id="SSF52058">
    <property type="entry name" value="L domain-like"/>
    <property type="match status" value="1"/>
</dbReference>
<dbReference type="PROSITE" id="PS00237">
    <property type="entry name" value="G_PROTEIN_RECEP_F1_1"/>
    <property type="match status" value="1"/>
</dbReference>
<dbReference type="PROSITE" id="PS50262">
    <property type="entry name" value="G_PROTEIN_RECEP_F1_2"/>
    <property type="match status" value="1"/>
</dbReference>
<feature type="signal peptide">
    <location>
        <begin position="1"/>
        <end position="20"/>
    </location>
</feature>
<feature type="chain" id="PRO_0000012786" description="Thyrotropin receptor">
    <location>
        <begin position="21"/>
        <end position="764"/>
    </location>
</feature>
<feature type="topological domain" description="Extracellular" evidence="2">
    <location>
        <begin position="21"/>
        <end position="413"/>
    </location>
</feature>
<feature type="transmembrane region" description="Helical; Name=1" evidence="2">
    <location>
        <begin position="414"/>
        <end position="441"/>
    </location>
</feature>
<feature type="topological domain" description="Cytoplasmic" evidence="2">
    <location>
        <begin position="442"/>
        <end position="450"/>
    </location>
</feature>
<feature type="transmembrane region" description="Helical; Name=2" evidence="2">
    <location>
        <begin position="451"/>
        <end position="473"/>
    </location>
</feature>
<feature type="topological domain" description="Extracellular" evidence="2">
    <location>
        <begin position="474"/>
        <end position="494"/>
    </location>
</feature>
<feature type="transmembrane region" description="Helical; Name=3" evidence="2">
    <location>
        <begin position="495"/>
        <end position="517"/>
    </location>
</feature>
<feature type="topological domain" description="Cytoplasmic" evidence="2">
    <location>
        <begin position="518"/>
        <end position="537"/>
    </location>
</feature>
<feature type="transmembrane region" description="Helical; Name=4" evidence="2">
    <location>
        <begin position="538"/>
        <end position="560"/>
    </location>
</feature>
<feature type="topological domain" description="Extracellular" evidence="2">
    <location>
        <begin position="561"/>
        <end position="580"/>
    </location>
</feature>
<feature type="transmembrane region" description="Helical; Name=5" evidence="2">
    <location>
        <begin position="581"/>
        <end position="602"/>
    </location>
</feature>
<feature type="topological domain" description="Cytoplasmic" evidence="2">
    <location>
        <begin position="603"/>
        <end position="625"/>
    </location>
</feature>
<feature type="transmembrane region" description="Helical; Name=6" evidence="2">
    <location>
        <begin position="626"/>
        <end position="649"/>
    </location>
</feature>
<feature type="topological domain" description="Extracellular" evidence="2">
    <location>
        <begin position="650"/>
        <end position="660"/>
    </location>
</feature>
<feature type="transmembrane region" description="Helical; Name=7" evidence="2">
    <location>
        <begin position="661"/>
        <end position="682"/>
    </location>
</feature>
<feature type="topological domain" description="Cytoplasmic" evidence="2">
    <location>
        <begin position="683"/>
        <end position="764"/>
    </location>
</feature>
<feature type="repeat" description="LRR 1">
    <location>
        <begin position="100"/>
        <end position="124"/>
    </location>
</feature>
<feature type="repeat" description="LRR 2">
    <location>
        <begin position="125"/>
        <end position="150"/>
    </location>
</feature>
<feature type="repeat" description="LRR 3">
    <location>
        <begin position="152"/>
        <end position="174"/>
    </location>
</feature>
<feature type="repeat" description="LRR 4">
    <location>
        <begin position="176"/>
        <end position="199"/>
    </location>
</feature>
<feature type="repeat" description="LRR 5">
    <location>
        <begin position="200"/>
        <end position="223"/>
    </location>
</feature>
<feature type="repeat" description="LRR 6">
    <location>
        <begin position="227"/>
        <end position="248"/>
    </location>
</feature>
<feature type="repeat" description="LRR 7">
    <location>
        <begin position="250"/>
        <end position="271"/>
    </location>
</feature>
<feature type="short sequence motif" description="PDZ-binding">
    <location>
        <begin position="762"/>
        <end position="764"/>
    </location>
</feature>
<feature type="modified residue" description="Sulfotyrosine" evidence="72">
    <location>
        <position position="385"/>
    </location>
</feature>
<feature type="glycosylation site" description="N-linked (GlcNAc...) asparagine" evidence="20 37">
    <location>
        <position position="77"/>
    </location>
</feature>
<feature type="glycosylation site" description="N-linked (GlcNAc...) asparagine" evidence="37">
    <location>
        <position position="99"/>
    </location>
</feature>
<feature type="glycosylation site" description="N-linked (GlcNAc...) asparagine" evidence="20 37">
    <location>
        <position position="113"/>
    </location>
</feature>
<feature type="glycosylation site" description="N-linked (GlcNAc...) asparagine" evidence="37">
    <location>
        <position position="177"/>
    </location>
</feature>
<feature type="glycosylation site" description="N-linked (GlcNAc...) asparagine" evidence="20 37">
    <location>
        <position position="198"/>
    </location>
</feature>
<feature type="glycosylation site" description="N-linked (GlcNAc...) asparagine" evidence="20">
    <location>
        <position position="302"/>
    </location>
</feature>
<feature type="disulfide bond">
    <location>
        <begin position="31"/>
        <end position="41"/>
    </location>
</feature>
<feature type="disulfide bond" evidence="3">
    <location>
        <begin position="494"/>
        <end position="569"/>
    </location>
</feature>
<feature type="splice variant" id="VSP_044643" description="In isoform 3." evidence="70">
    <original>DVSQTSVTALPSKGLEHLKELIARNTWTLKKLPLSLSFLHLTR</original>
    <variation>VENVAVSGKGFCKSLFSWLYRLPLGRKSLSFETQKAPRSSMPS</variation>
    <location>
        <begin position="232"/>
        <end position="274"/>
    </location>
</feature>
<feature type="splice variant" id="VSP_001981" description="In isoform Short." evidence="68 69 70">
    <original>DVSQTSVTALPSKGLEHLKELI</original>
    <variation>LPLGRKSLSFETQKAPRSSMPS</variation>
    <location>
        <begin position="232"/>
        <end position="253"/>
    </location>
</feature>
<feature type="splice variant" id="VSP_001982" description="In isoform Short." evidence="68 69 70">
    <location>
        <begin position="254"/>
        <end position="764"/>
    </location>
</feature>
<feature type="splice variant" id="VSP_044644" description="In isoform 3." evidence="70">
    <location>
        <begin position="275"/>
        <end position="764"/>
    </location>
</feature>
<feature type="sequence variant" id="VAR_055925" description="In dbSNP:rs45499704.">
    <original>E</original>
    <variation>K</variation>
    <location>
        <position position="34"/>
    </location>
</feature>
<feature type="sequence variant" id="VAR_003564" description="In a patient with Graves disease; dbSNP:rs61747482." evidence="30 31 33 38 46">
    <original>D</original>
    <variation>H</variation>
    <location>
        <position position="36"/>
    </location>
</feature>
<feature type="sequence variant" id="VAR_011519" description="In CHNG1." evidence="26 54">
    <original>C</original>
    <variation>S</variation>
    <location>
        <position position="41"/>
    </location>
</feature>
<feature type="sequence variant" id="VAR_003565" description="Does not contribute to the genetic susceptibility to Graves disease; dbSNP:rs2234919." evidence="8 30 31 33 43 44 45">
    <original>P</original>
    <variation>T</variation>
    <location>
        <position position="52"/>
    </location>
</feature>
<feature type="sequence variant" id="VAR_011520" description="In CHNG1." evidence="57">
    <original>R</original>
    <variation>Q</variation>
    <location>
        <position position="109"/>
    </location>
</feature>
<feature type="sequence variant" id="VAR_011521" description="In CHNG1; dbSNP:rs121908863." evidence="26 35 41 45 54">
    <original>P</original>
    <variation>A</variation>
    <location>
        <position position="162"/>
    </location>
</feature>
<feature type="sequence variant" id="VAR_011522" description="In CHNG1." evidence="45">
    <original>I</original>
    <variation>N</variation>
    <location>
        <position position="167"/>
    </location>
</feature>
<feature type="sequence variant" id="VAR_003566" description="In HTFG; enhances receptor response to chorionic gonadotropin." evidence="66">
    <original>K</original>
    <variation>R</variation>
    <location>
        <position position="183"/>
    </location>
</feature>
<feature type="sequence variant" id="VAR_003567" description="In papillary cancer." evidence="47">
    <original>F</original>
    <variation>I</variation>
    <location>
        <position position="197"/>
    </location>
</feature>
<feature type="sequence variant" id="VAR_003568" description="In papillary cancer." evidence="47">
    <original>D</original>
    <variation>E</variation>
    <location>
        <position position="219"/>
    </location>
</feature>
<feature type="sequence variant" id="VAR_021495" description="In CHNG1; displays a low expression at the cell surface and a reduced response to bovine TSH in terms of cAMP production." evidence="35">
    <original>L</original>
    <variation>P</variation>
    <location>
        <position position="252"/>
    </location>
</feature>
<feature type="sequence variant" id="VAR_003569" description="In hyperthyroidism; congenital; due to a toxic adenoma." evidence="60">
    <original>S</original>
    <variation>I</variation>
    <location>
        <position position="281"/>
    </location>
</feature>
<feature type="sequence variant" id="VAR_003570" description="In HTNA; gain of function; found in toxic thyroid nodules and hyperfunctioning thyroid adenomas." evidence="10 15 18 59 65">
    <original>S</original>
    <variation>N</variation>
    <location>
        <position position="281"/>
    </location>
</feature>
<feature type="sequence variant" id="VAR_011523" description="In hyperthyroidism; found in hyperfunctioning thyroid adenomas." evidence="59">
    <original>S</original>
    <variation>T</variation>
    <location>
        <position position="281"/>
    </location>
</feature>
<feature type="sequence variant" id="VAR_011524" description="In CHNG1." evidence="14">
    <original>R</original>
    <variation>C</variation>
    <location>
        <position position="310"/>
    </location>
</feature>
<feature type="sequence variant" id="VAR_011525" description="In CHNG1; persistent hypothyroidism and defective thyroid development; abolishes high affinity hormone binding." evidence="54 61">
    <original>C</original>
    <variation>W</variation>
    <location>
        <position position="390"/>
    </location>
</feature>
<feature type="sequence variant" id="VAR_011526" description="In CHNG1; lack of adenylate cyclase activation." evidence="54">
    <original>D</original>
    <variation>N</variation>
    <location>
        <position position="410"/>
    </location>
</feature>
<feature type="sequence variant" id="VAR_021496" description="Found in toxic thyroid nodules; 8 to 9 times higher levels of basal cAMP than wild-type TSHR and similar response to maximal TSH stimulation." evidence="18">
    <original>S</original>
    <variation>I</variation>
    <location>
        <position position="425"/>
    </location>
</feature>
<feature type="sequence variant" id="VAR_011527" description="In HTNA; gain of function; constitutive activation of the G(s)/adenylyl cyclase system." evidence="15 22">
    <original>G</original>
    <variation>S</variation>
    <location>
        <position position="431"/>
    </location>
</feature>
<feature type="sequence variant" id="VAR_075585" description="In CHNG1; abolishes cell membrane location; abolishes adenylate cyclase-activating G-protein coupled receptor signaling pathway; abolishes phospholipase C-activating G-protein coupled receptor signaling pathway." evidence="41">
    <original>N</original>
    <variation>D</variation>
    <location>
        <position position="432"/>
    </location>
</feature>
<feature type="sequence variant" id="VAR_075586" description="In CHNG1; no effect on cell membrane location; upon TSH stimulation decreases more phospholipase C-activating G-protein coupled receptor signaling pathway than adenylate cyclase-activating G-protein coupled receptor signaling pathway." evidence="41">
    <original>P</original>
    <variation>L</variation>
    <location>
        <position position="449"/>
    </location>
</feature>
<feature type="sequence variant" id="VAR_011528" description="In CHNG1." evidence="19">
    <original>R</original>
    <variation>H</variation>
    <location>
        <position position="450"/>
    </location>
</feature>
<feature type="sequence variant" id="VAR_011529" description="In HTNA; sporadic; found in toxic thyroid nodules and hyperfunctioning thyroid adenomas." evidence="18 27 55 59">
    <original>M</original>
    <variation>T</variation>
    <location>
        <position position="453"/>
    </location>
</feature>
<feature type="sequence variant" id="VAR_011530" description="In HTNA; gain of function." evidence="17">
    <original>M</original>
    <variation>V</variation>
    <location>
        <position position="463"/>
    </location>
</feature>
<feature type="sequence variant" id="VAR_017295" description="In CHNG1." evidence="26">
    <original>L</original>
    <variation>P</variation>
    <location>
        <position position="467"/>
    </location>
</feature>
<feature type="sequence variant" id="VAR_017296" description="In CHNG1; severe hypothyroidism." evidence="9">
    <original>T</original>
    <variation>I</variation>
    <location>
        <position position="477"/>
    </location>
</feature>
<feature type="sequence variant" id="VAR_011531" description="In HTNA; found in thyroid toxic nodules and hyperfunctioning thyroid adenomas; also in hyperfunctioning follicular carcinoma." evidence="10 16 18 59">
    <original>I</original>
    <variation>F</variation>
    <location>
        <position position="486"/>
    </location>
</feature>
<feature type="sequence variant" id="VAR_011532" description="In HTNA; found in hyperfunctioning thyroid adenomas." evidence="10 27 59">
    <original>I</original>
    <variation>M</variation>
    <location>
        <position position="486"/>
    </location>
</feature>
<feature type="sequence variant" id="VAR_011533" description="In CHNG1." evidence="19">
    <original>G</original>
    <variation>S</variation>
    <location>
        <position position="498"/>
    </location>
</feature>
<feature type="sequence variant" id="VAR_003571" description="In HTNA; found in toxic thyroid nodules." evidence="18 34 63">
    <original>S</original>
    <variation>N</variation>
    <location>
        <position position="505"/>
    </location>
</feature>
<feature type="sequence variant" id="VAR_011534" description="In HTNA; gain of function." evidence="53">
    <original>S</original>
    <variation>R</variation>
    <location>
        <position position="505"/>
    </location>
</feature>
<feature type="sequence variant" id="VAR_011535" description="In HTNA; gain of function." evidence="49">
    <original>V</original>
    <variation>A</variation>
    <location>
        <position position="509"/>
    </location>
</feature>
<feature type="sequence variant" id="VAR_021497" description="Found in toxic thyroid nodules; 5 times higher levels of basal cAMP than wild-type TSHR and slightly less response to maximal TSH stimulation." evidence="18">
    <original>L</original>
    <variation>Q</variation>
    <location>
        <position position="512"/>
    </location>
</feature>
<feature type="sequence variant" id="VAR_011536" description="In hyperthyroidism; found in autonomously functioning thyroid nodules; 3.3-fold increase in basal cAMP level." evidence="12 18 27">
    <original>L</original>
    <variation>R</variation>
    <location>
        <position position="512"/>
    </location>
</feature>
<feature type="sequence variant" id="VAR_011537" description="In CHNG1; impairs adenylate cyclase activation." evidence="54">
    <original>F</original>
    <variation>L</variation>
    <location>
        <position position="525"/>
    </location>
</feature>
<feature type="sequence variant" id="VAR_003572" evidence="65">
    <original>R</original>
    <variation>H</variation>
    <location>
        <position position="528"/>
    </location>
</feature>
<feature type="sequence variant" id="VAR_011538" description="In CHNG1; severe hypothyroidism." evidence="32 58">
    <original>A</original>
    <variation>T</variation>
    <location>
        <position position="553"/>
    </location>
</feature>
<feature type="sequence variant" id="VAR_011539" description="In HTNA; found in thyroid toxic nodules and hyperfunctioning thyroid adenomas." evidence="13 18 59">
    <original>I</original>
    <variation>T</variation>
    <location>
        <position position="568"/>
    </location>
</feature>
<feature type="sequence variant" id="VAR_021498" description="In toxic thyroid adenoma; somatic mutation; constitutively activates the cAMP cascade; requires 2 nucleotide substitutions." evidence="28">
    <original>A</original>
    <variation>N</variation>
    <location>
        <position position="593"/>
    </location>
</feature>
<feature type="sequence variant" id="VAR_021499" description="In HTNA; 11-fold increase in specific constitutive activity; decreased receptor protein expression." evidence="21">
    <original>V</original>
    <variation>F</variation>
    <location>
        <position position="597"/>
    </location>
</feature>
<feature type="sequence variant" id="VAR_011540" description="In hyperthyroidism; congenital with severe thyrotoxicosis." evidence="7">
    <original>V</original>
    <variation>L</variation>
    <location>
        <position position="597"/>
    </location>
</feature>
<feature type="sequence variant" id="VAR_017297" description="In CHNG1." evidence="26">
    <original>C</original>
    <variation>R</variation>
    <location>
        <position position="600"/>
    </location>
</feature>
<feature type="sequence variant" id="VAR_011541" evidence="6">
    <original>I</original>
    <variation>M</variation>
    <location>
        <position position="606"/>
    </location>
</feature>
<feature type="sequence variant" id="VAR_003573" description="In hyperthyroidism; found in toxic thyroid nodules and hyperfunctioning thyroid adenomas." evidence="18 52 59">
    <original>D</original>
    <variation>G</variation>
    <location>
        <position position="619"/>
    </location>
</feature>
<feature type="sequence variant" id="VAR_003574" description="In hyperthyroidism; found in hyperfunctioning thyroid adenomas; gain of function; requires 2 nucleotide substitutions." evidence="52 59">
    <original>A</original>
    <variation>I</variation>
    <location>
        <position position="623"/>
    </location>
</feature>
<feature type="sequence variant" id="VAR_011542" description="In hyperthyroidism; found in toxic thyroid nodules and hyperfunctioning thyroid adenomas; gain of function." evidence="18 50">
    <original>A</original>
    <variation>V</variation>
    <location>
        <position position="623"/>
    </location>
</feature>
<feature type="sequence variant" id="VAR_003575" description="In HTNA; also in hyperfunctioning thyroid adenomas and non-adenomatous nodules." evidence="10 59 64">
    <original>L</original>
    <variation>F</variation>
    <location>
        <position position="629"/>
    </location>
</feature>
<feature type="sequence variant" id="VAR_011543" description="In hyperthyroidism; found in hyperfunctioning thyroid adenomas." evidence="59">
    <original>I</original>
    <variation>L</variation>
    <location>
        <position position="630"/>
    </location>
</feature>
<feature type="sequence variant" id="VAR_011544" description="In hyperthyroidism; found in hyperfunctioning thyroid adenomas." evidence="51">
    <original>F</original>
    <variation>C</variation>
    <location>
        <position position="631"/>
    </location>
</feature>
<feature type="sequence variant" id="VAR_011545" description="In HTNA; gain of function; found in toxic thyroid nodules and hyperfunctioning thyroid adenomas." evidence="18 48 59">
    <original>F</original>
    <variation>L</variation>
    <location>
        <position position="631"/>
    </location>
</feature>
<feature type="sequence variant" id="VAR_011546" description="In HTNA; found in toxic thyroid nodules and hyperfunctioning non-adenomatous nodules." evidence="10 18 27">
    <original>T</original>
    <variation>A</variation>
    <location>
        <position position="632"/>
    </location>
</feature>
<feature type="sequence variant" id="VAR_011547" description="In HTNA; gain of function; found in thyroid toxic nodules and hyperfunctioning thyroid adenomas." evidence="10 15 18 50 51 59 62">
    <original>T</original>
    <variation>I</variation>
    <location>
        <position position="632"/>
    </location>
</feature>
<feature type="sequence variant" id="VAR_011548" description="In hyperthyroidism; found in hyperfunctioning thyroid adenomas." evidence="59">
    <original>D</original>
    <variation>A</variation>
    <location>
        <position position="633"/>
    </location>
</feature>
<feature type="sequence variant" id="VAR_011549" description="In HTNA; found in thyroid toxic nodules and hyperfunctioning thyroid adenomas." evidence="10 18 51 59">
    <original>D</original>
    <variation>E</variation>
    <location>
        <position position="633"/>
    </location>
</feature>
<feature type="sequence variant" id="VAR_011550" description="In hyperthyroidism; found in toxic thyroid nodules and hyperfunctioning thyroid adenomas; also found in hyperfunctioning insular carcinoma; gain of function; dbSNP:rs28937584." evidence="18 56 59">
    <original>D</original>
    <variation>H</variation>
    <location>
        <position position="633"/>
    </location>
</feature>
<feature type="sequence variant" id="VAR_011551" description="In hyperthyroidism; found in toxic thyroid nodules and hyperfunctioning thyroid adenomas." evidence="18 51 59">
    <original>D</original>
    <variation>Y</variation>
    <location>
        <position position="633"/>
    </location>
</feature>
<feature type="sequence variant" id="VAR_021500" description="Found in toxic thyroid nodules." evidence="18">
    <original>P</original>
    <variation>A</variation>
    <location>
        <position position="639"/>
    </location>
</feature>
<feature type="sequence variant" id="VAR_011552" description="In HTNA; gain of function." evidence="5">
    <original>P</original>
    <variation>S</variation>
    <location>
        <position position="639"/>
    </location>
</feature>
<feature type="sequence variant" id="VAR_011553" description="In HTNA; found in non-adenomatous hyperfunctioning nodules." evidence="10">
    <original>A</original>
    <variation>V</variation>
    <location>
        <position position="647"/>
    </location>
</feature>
<feature type="sequence variant" id="VAR_011554" description="In HTNA; gain of function." evidence="53">
    <original>N</original>
    <variation>Y</variation>
    <location>
        <position position="650"/>
    </location>
</feature>
<feature type="sequence variant" id="VAR_021501" description="Found in toxic thyroid nodules." evidence="18">
    <original>V</original>
    <variation>F</variation>
    <location>
        <position position="656"/>
    </location>
</feature>
<feature type="sequence variant" id="VAR_011555" description="In hyperthyroidism; found in hyperfunctioning thyroid adenomas." evidence="59">
    <location>
        <begin position="658"/>
        <end position="661"/>
    </location>
</feature>
<feature type="sequence variant" id="VAR_011556" description="In HTNA; gain of function." evidence="53">
    <original>N</original>
    <variation>S</variation>
    <location>
        <position position="670"/>
    </location>
</feature>
<feature type="sequence variant" id="VAR_011557" description="In HTNA; gain of function." evidence="49">
    <original>C</original>
    <variation>Y</variation>
    <location>
        <position position="672"/>
    </location>
</feature>
<feature type="sequence variant" id="VAR_011558" description="In thyroid carcinoma; with thyrotoxicosis; gain of function." evidence="4">
    <original>L</original>
    <variation>V</variation>
    <location>
        <position position="677"/>
    </location>
</feature>
<feature type="sequence variant" id="VAR_011559" evidence="6">
    <original>A</original>
    <variation>G</variation>
    <location>
        <position position="703"/>
    </location>
</feature>
<feature type="sequence variant" id="VAR_003576" description="In papillary cancer." evidence="47">
    <original>N</original>
    <variation>D</variation>
    <location>
        <position position="715"/>
    </location>
</feature>
<feature type="sequence variant" id="VAR_011560" evidence="6">
    <original>Q</original>
    <variation>E</variation>
    <location>
        <position position="720"/>
    </location>
</feature>
<feature type="sequence variant" id="VAR_003577" description="In papillary cancer." evidence="47">
    <original>K</original>
    <variation>M</variation>
    <location>
        <position position="723"/>
    </location>
</feature>
<feature type="sequence variant" id="VAR_003578" description="No effect on thyroid-stimulating hormone receptor activity; dbSNP:rs1991517." evidence="6 11 24 28 29 30 31 39 40 67">
    <original>E</original>
    <variation>D</variation>
    <location>
        <position position="727"/>
    </location>
</feature>
<feature type="mutagenesis site" description="Abolishes cell surface expression." evidence="23">
    <original>C</original>
    <variation>S</variation>
    <location>
        <position position="283"/>
    </location>
</feature>
<feature type="mutagenesis site" description="Inhibits intracellular cAMP accumulation." evidence="23">
    <original>YDY</original>
    <variation>EDE</variation>
    <location>
        <begin position="385"/>
        <end position="387"/>
    </location>
</feature>
<feature type="mutagenesis site" description="Abolishes sulfation. Inhibits intracellular cAMP accumulation." evidence="23">
    <original>YDY</original>
    <variation>FDF</variation>
    <location>
        <begin position="385"/>
        <end position="387"/>
    </location>
</feature>
<feature type="mutagenesis site" description="Reduces binding with thyrotropin. Inhibits intracellular cAMP accumulation." evidence="23 72">
    <original>Y</original>
    <variation>E</variation>
    <location>
        <position position="385"/>
    </location>
</feature>
<feature type="mutagenesis site" description="Reduces sulfation. Reduces binding with thyrotropin. Inhibits intracellular cAMP accumulation." evidence="23 72">
    <original>Y</original>
    <variation>F</variation>
    <location>
        <position position="385"/>
    </location>
</feature>
<feature type="mutagenesis site" description="No change in intracellular cAMP accumulation." evidence="23">
    <original>Y</original>
    <variation>E</variation>
    <location>
        <position position="387"/>
    </location>
</feature>
<feature type="mutagenesis site" description="Reduces sulfation. No change in intracellular cAMP accumulation." evidence="23">
    <original>Y</original>
    <variation>F</variation>
    <location>
        <position position="387"/>
    </location>
</feature>
<feature type="sequence conflict" description="In Ref. 2; no nucleotide entry." evidence="71" ref="2">
    <original>V</original>
    <variation>L</variation>
    <location>
        <position position="87"/>
    </location>
</feature>
<feature type="sequence conflict" description="In Ref. 4; AAA70232." evidence="71" ref="4">
    <original>AFN</original>
    <variation>DFF</variation>
    <location>
        <begin position="196"/>
        <end position="198"/>
    </location>
</feature>
<feature type="sequence conflict" description="In Ref. 4; AAA70232." evidence="71" ref="4">
    <original>T</original>
    <variation>S</variation>
    <location>
        <position position="257"/>
    </location>
</feature>
<feature type="sequence conflict" description="In Ref. 4; AAA70232." evidence="71" ref="4">
    <original>P</original>
    <variation>A</variation>
    <location>
        <position position="264"/>
    </location>
</feature>
<feature type="sequence conflict" description="In Ref. 4; AAA70232." evidence="71" ref="4">
    <original>MQS</original>
    <variation>IET</variation>
    <location>
        <begin position="306"/>
        <end position="308"/>
    </location>
</feature>
<feature type="sequence conflict" description="In Ref. 4; AAA70232." evidence="71" ref="4">
    <original>R</original>
    <variation>A</variation>
    <location>
        <position position="528"/>
    </location>
</feature>
<feature type="sequence conflict" description="In Ref. 1; AAA36783." evidence="71" ref="1">
    <original>Y</original>
    <variation>H</variation>
    <location>
        <position position="601"/>
    </location>
</feature>
<feature type="sequence conflict" description="In Ref. 4; AAA70232." evidence="71" ref="4">
    <original>I</original>
    <variation>T</variation>
    <location>
        <position position="635"/>
    </location>
</feature>
<feature type="sequence conflict" description="In Ref. 4; AAA70232." evidence="71" ref="4">
    <original>L</original>
    <variation>V</variation>
    <location>
        <position position="645"/>
    </location>
</feature>
<feature type="sequence conflict" description="In Ref. 4; AAA70232." evidence="71" ref="4">
    <original>L</original>
    <variation>I</variation>
    <location>
        <position position="669"/>
    </location>
</feature>
<feature type="sequence conflict" description="In Ref. 3; AAA61236." evidence="71" ref="3">
    <original>N</original>
    <variation>K</variation>
    <location>
        <position position="744"/>
    </location>
</feature>
<feature type="strand" evidence="73">
    <location>
        <begin position="26"/>
        <end position="28"/>
    </location>
</feature>
<feature type="strand" evidence="73">
    <location>
        <begin position="30"/>
        <end position="33"/>
    </location>
</feature>
<feature type="turn" evidence="74">
    <location>
        <begin position="35"/>
        <end position="37"/>
    </location>
</feature>
<feature type="strand" evidence="73">
    <location>
        <begin position="38"/>
        <end position="41"/>
    </location>
</feature>
<feature type="strand" evidence="73">
    <location>
        <begin position="56"/>
        <end position="61"/>
    </location>
</feature>
<feature type="strand" evidence="73">
    <location>
        <begin position="65"/>
        <end position="67"/>
    </location>
</feature>
<feature type="turn" evidence="73">
    <location>
        <begin position="69"/>
        <end position="74"/>
    </location>
</feature>
<feature type="strand" evidence="73">
    <location>
        <begin position="80"/>
        <end position="84"/>
    </location>
</feature>
<feature type="turn" evidence="73">
    <location>
        <begin position="94"/>
        <end position="96"/>
    </location>
</feature>
<feature type="strand" evidence="73">
    <location>
        <begin position="97"/>
        <end position="99"/>
    </location>
</feature>
<feature type="strand" evidence="73">
    <location>
        <begin position="105"/>
        <end position="111"/>
    </location>
</feature>
<feature type="strand" evidence="73">
    <location>
        <begin position="121"/>
        <end position="123"/>
    </location>
</feature>
<feature type="strand" evidence="73">
    <location>
        <begin position="130"/>
        <end position="136"/>
    </location>
</feature>
<feature type="strand" evidence="73">
    <location>
        <begin position="152"/>
        <end position="160"/>
    </location>
</feature>
<feature type="turn" evidence="73">
    <location>
        <begin position="169"/>
        <end position="174"/>
    </location>
</feature>
<feature type="strand" evidence="73">
    <location>
        <begin position="175"/>
        <end position="183"/>
    </location>
</feature>
<feature type="strand" evidence="74">
    <location>
        <begin position="190"/>
        <end position="192"/>
    </location>
</feature>
<feature type="turn" evidence="73">
    <location>
        <begin position="194"/>
        <end position="199"/>
    </location>
</feature>
<feature type="strand" evidence="73">
    <location>
        <begin position="201"/>
        <end position="206"/>
    </location>
</feature>
<feature type="turn" evidence="73">
    <location>
        <begin position="218"/>
        <end position="223"/>
    </location>
</feature>
<feature type="strand" evidence="73">
    <location>
        <begin position="229"/>
        <end position="232"/>
    </location>
</feature>
<feature type="strand" evidence="78">
    <location>
        <begin position="243"/>
        <end position="245"/>
    </location>
</feature>
<feature type="helix" evidence="76">
    <location>
        <begin position="246"/>
        <end position="248"/>
    </location>
</feature>
<feature type="strand" evidence="73">
    <location>
        <begin position="250"/>
        <end position="253"/>
    </location>
</feature>
<feature type="helix" evidence="78">
    <location>
        <begin position="266"/>
        <end position="269"/>
    </location>
</feature>
<feature type="strand" evidence="77">
    <location>
        <begin position="274"/>
        <end position="276"/>
    </location>
</feature>
<feature type="strand" evidence="77">
    <location>
        <begin position="278"/>
        <end position="280"/>
    </location>
</feature>
<feature type="helix" evidence="77">
    <location>
        <begin position="281"/>
        <end position="286"/>
    </location>
</feature>
<feature type="helix" evidence="77">
    <location>
        <begin position="295"/>
        <end position="304"/>
    </location>
</feature>
<feature type="helix" evidence="77">
    <location>
        <begin position="377"/>
        <end position="390"/>
    </location>
</feature>
<feature type="strand" evidence="77">
    <location>
        <begin position="397"/>
        <end position="400"/>
    </location>
</feature>
<feature type="strand" evidence="76">
    <location>
        <begin position="404"/>
        <end position="406"/>
    </location>
</feature>
<feature type="helix" evidence="77">
    <location>
        <begin position="417"/>
        <end position="441"/>
    </location>
</feature>
<feature type="strand" evidence="76">
    <location>
        <begin position="442"/>
        <end position="444"/>
    </location>
</feature>
<feature type="helix" evidence="77">
    <location>
        <begin position="448"/>
        <end position="476"/>
    </location>
</feature>
<feature type="turn" evidence="76">
    <location>
        <begin position="477"/>
        <end position="480"/>
    </location>
</feature>
<feature type="helix" evidence="77">
    <location>
        <begin position="481"/>
        <end position="490"/>
    </location>
</feature>
<feature type="helix" evidence="77">
    <location>
        <begin position="492"/>
        <end position="524"/>
    </location>
</feature>
<feature type="turn" evidence="75">
    <location>
        <begin position="525"/>
        <end position="527"/>
    </location>
</feature>
<feature type="helix" evidence="77">
    <location>
        <begin position="529"/>
        <end position="531"/>
    </location>
</feature>
<feature type="helix" evidence="77">
    <location>
        <begin position="535"/>
        <end position="558"/>
    </location>
</feature>
<feature type="helix" evidence="77">
    <location>
        <begin position="577"/>
        <end position="608"/>
    </location>
</feature>
<feature type="strand" evidence="75">
    <location>
        <begin position="611"/>
        <end position="613"/>
    </location>
</feature>
<feature type="helix" evidence="77">
    <location>
        <begin position="620"/>
        <end position="648"/>
    </location>
</feature>
<feature type="helix" evidence="77">
    <location>
        <begin position="656"/>
        <end position="665"/>
    </location>
</feature>
<feature type="turn" evidence="77">
    <location>
        <begin position="666"/>
        <end position="668"/>
    </location>
</feature>
<feature type="helix" evidence="77">
    <location>
        <begin position="669"/>
        <end position="678"/>
    </location>
</feature>
<feature type="turn" evidence="77">
    <location>
        <begin position="679"/>
        <end position="681"/>
    </location>
</feature>
<feature type="helix" evidence="77">
    <location>
        <begin position="683"/>
        <end position="696"/>
    </location>
</feature>
<feature type="sequence conflict" description="In Ref. 6; AAB24246." evidence="71" ref="6">
    <original>L</original>
    <variation>F</variation>
    <location sequence="P16473-2">
        <position position="239"/>
    </location>
</feature>
<feature type="sequence conflict" description="In Ref. 5; AAB23390 and 9; AAH09237/AAI20974." evidence="71" ref="5 9">
    <original>R</original>
    <variation>S</variation>
    <location sequence="P16473-2">
        <position position="248"/>
    </location>
</feature>
<feature type="sequence conflict" description="In Ref. 5; AAB23390." evidence="71" ref="5">
    <original>M</original>
    <variation>T</variation>
    <location sequence="P16473-2">
        <position position="251"/>
    </location>
</feature>
<feature type="sequence conflict" description="In Ref. 9; AAI27629." evidence="71" ref="9">
    <original>R</original>
    <variation>S</variation>
    <location sequence="P16473-3">
        <position position="269"/>
    </location>
</feature>
<name>TSHR_HUMAN</name>